<accession>Q9Y4K3</accession>
<accession>A6NKI7</accession>
<accession>A8KAB3</accession>
<accession>D3DR16</accession>
<accession>Q8NEH5</accession>
<protein>
    <recommendedName>
        <fullName>TNF receptor-associated factor 6</fullName>
        <ecNumber evidence="12 19 22 30">2.3.2.27</ecNumber>
    </recommendedName>
    <alternativeName>
        <fullName>E3 ubiquitin-protein ligase TRAF6</fullName>
    </alternativeName>
    <alternativeName>
        <fullName>Interleukin-1 signal transducer</fullName>
    </alternativeName>
    <alternativeName>
        <fullName>RING finger protein 85</fullName>
    </alternativeName>
    <alternativeName>
        <fullName evidence="34">RING-type E3 ubiquitin transferase TRAF6</fullName>
    </alternativeName>
</protein>
<dbReference type="EC" id="2.3.2.27" evidence="12 19 22 30"/>
<dbReference type="EMBL" id="U78798">
    <property type="protein sequence ID" value="AAB38751.1"/>
    <property type="molecule type" value="mRNA"/>
</dbReference>
<dbReference type="EMBL" id="AY228337">
    <property type="protein sequence ID" value="AAO38054.1"/>
    <property type="molecule type" value="Genomic_DNA"/>
</dbReference>
<dbReference type="EMBL" id="AK292978">
    <property type="protein sequence ID" value="BAF85667.1"/>
    <property type="molecule type" value="mRNA"/>
</dbReference>
<dbReference type="EMBL" id="AC009656">
    <property type="status" value="NOT_ANNOTATED_CDS"/>
    <property type="molecule type" value="Genomic_DNA"/>
</dbReference>
<dbReference type="EMBL" id="AC061999">
    <property type="status" value="NOT_ANNOTATED_CDS"/>
    <property type="molecule type" value="Genomic_DNA"/>
</dbReference>
<dbReference type="EMBL" id="CH471064">
    <property type="protein sequence ID" value="EAW68119.1"/>
    <property type="molecule type" value="Genomic_DNA"/>
</dbReference>
<dbReference type="EMBL" id="CH471064">
    <property type="protein sequence ID" value="EAW68120.1"/>
    <property type="molecule type" value="Genomic_DNA"/>
</dbReference>
<dbReference type="EMBL" id="CH471064">
    <property type="protein sequence ID" value="EAW68122.1"/>
    <property type="molecule type" value="Genomic_DNA"/>
</dbReference>
<dbReference type="EMBL" id="BC031052">
    <property type="protein sequence ID" value="AAH31052.1"/>
    <property type="molecule type" value="mRNA"/>
</dbReference>
<dbReference type="CCDS" id="CCDS7901.1"/>
<dbReference type="PIR" id="S71821">
    <property type="entry name" value="S71821"/>
</dbReference>
<dbReference type="RefSeq" id="NP_004611.1">
    <property type="nucleotide sequence ID" value="NM_004620.4"/>
</dbReference>
<dbReference type="RefSeq" id="NP_665802.1">
    <property type="nucleotide sequence ID" value="NM_145803.3"/>
</dbReference>
<dbReference type="PDB" id="1LB4">
    <property type="method" value="X-ray"/>
    <property type="resolution" value="2.40 A"/>
    <property type="chains" value="A=348-504"/>
</dbReference>
<dbReference type="PDB" id="1LB5">
    <property type="method" value="X-ray"/>
    <property type="resolution" value="2.40 A"/>
    <property type="chains" value="A=347-504"/>
</dbReference>
<dbReference type="PDB" id="1LB6">
    <property type="method" value="X-ray"/>
    <property type="resolution" value="1.80 A"/>
    <property type="chains" value="A=347-504"/>
</dbReference>
<dbReference type="PDB" id="2ECI">
    <property type="method" value="NMR"/>
    <property type="chains" value="A=50-128"/>
</dbReference>
<dbReference type="PDB" id="2JMD">
    <property type="method" value="NMR"/>
    <property type="chains" value="A=67-124"/>
</dbReference>
<dbReference type="PDB" id="3HCS">
    <property type="method" value="X-ray"/>
    <property type="resolution" value="2.20 A"/>
    <property type="chains" value="A/B=50-211"/>
</dbReference>
<dbReference type="PDB" id="3HCT">
    <property type="method" value="X-ray"/>
    <property type="resolution" value="2.10 A"/>
    <property type="chains" value="A=50-159"/>
</dbReference>
<dbReference type="PDB" id="3HCU">
    <property type="method" value="X-ray"/>
    <property type="resolution" value="2.60 A"/>
    <property type="chains" value="A/C=50-159"/>
</dbReference>
<dbReference type="PDB" id="4Z8M">
    <property type="method" value="X-ray"/>
    <property type="resolution" value="2.95 A"/>
    <property type="chains" value="A/B=346-504"/>
</dbReference>
<dbReference type="PDB" id="5ZUJ">
    <property type="method" value="X-ray"/>
    <property type="resolution" value="2.60 A"/>
    <property type="chains" value="A=350-501"/>
</dbReference>
<dbReference type="PDB" id="6A33">
    <property type="method" value="X-ray"/>
    <property type="resolution" value="2.10 A"/>
    <property type="chains" value="A=350-501"/>
</dbReference>
<dbReference type="PDB" id="7L3L">
    <property type="method" value="X-ray"/>
    <property type="resolution" value="2.80 A"/>
    <property type="chains" value="B/D=52-158"/>
</dbReference>
<dbReference type="PDB" id="8HZ2">
    <property type="method" value="X-ray"/>
    <property type="resolution" value="2.60 A"/>
    <property type="chains" value="A/B=54-210"/>
</dbReference>
<dbReference type="PDBsum" id="1LB4"/>
<dbReference type="PDBsum" id="1LB5"/>
<dbReference type="PDBsum" id="1LB6"/>
<dbReference type="PDBsum" id="2ECI"/>
<dbReference type="PDBsum" id="2JMD"/>
<dbReference type="PDBsum" id="3HCS"/>
<dbReference type="PDBsum" id="3HCT"/>
<dbReference type="PDBsum" id="3HCU"/>
<dbReference type="PDBsum" id="4Z8M"/>
<dbReference type="PDBsum" id="5ZUJ"/>
<dbReference type="PDBsum" id="6A33"/>
<dbReference type="PDBsum" id="7L3L"/>
<dbReference type="PDBsum" id="8HZ2"/>
<dbReference type="SMR" id="Q9Y4K3"/>
<dbReference type="BioGRID" id="113041">
    <property type="interactions" value="453"/>
</dbReference>
<dbReference type="ComplexPortal" id="CPX-9621">
    <property type="entry name" value="TRAF6-TIFA E3 ubiquitin ligase complex"/>
</dbReference>
<dbReference type="CORUM" id="Q9Y4K3"/>
<dbReference type="DIP" id="DIP-27515N"/>
<dbReference type="ELM" id="Q9Y4K3"/>
<dbReference type="FunCoup" id="Q9Y4K3">
    <property type="interactions" value="3273"/>
</dbReference>
<dbReference type="IntAct" id="Q9Y4K3">
    <property type="interactions" value="130"/>
</dbReference>
<dbReference type="MINT" id="Q9Y4K3"/>
<dbReference type="STRING" id="9606.ENSP00000433623"/>
<dbReference type="BindingDB" id="Q9Y4K3"/>
<dbReference type="ChEMBL" id="CHEMBL3588728"/>
<dbReference type="MoonDB" id="Q9Y4K3">
    <property type="type" value="Predicted"/>
</dbReference>
<dbReference type="GlyGen" id="Q9Y4K3">
    <property type="glycosylation" value="1 site"/>
</dbReference>
<dbReference type="iPTMnet" id="Q9Y4K3"/>
<dbReference type="PhosphoSitePlus" id="Q9Y4K3"/>
<dbReference type="BioMuta" id="TRAF6"/>
<dbReference type="DMDM" id="30580642"/>
<dbReference type="jPOST" id="Q9Y4K3"/>
<dbReference type="MassIVE" id="Q9Y4K3"/>
<dbReference type="PaxDb" id="9606-ENSP00000433623"/>
<dbReference type="PeptideAtlas" id="Q9Y4K3"/>
<dbReference type="ProteomicsDB" id="86225"/>
<dbReference type="Pumba" id="Q9Y4K3"/>
<dbReference type="Antibodypedia" id="3895">
    <property type="antibodies" value="560 antibodies from 45 providers"/>
</dbReference>
<dbReference type="DNASU" id="7189"/>
<dbReference type="Ensembl" id="ENST00000348124.5">
    <property type="protein sequence ID" value="ENSP00000337853.5"/>
    <property type="gene ID" value="ENSG00000175104.15"/>
</dbReference>
<dbReference type="Ensembl" id="ENST00000526995.6">
    <property type="protein sequence ID" value="ENSP00000433623.1"/>
    <property type="gene ID" value="ENSG00000175104.15"/>
</dbReference>
<dbReference type="GeneID" id="7189"/>
<dbReference type="KEGG" id="hsa:7189"/>
<dbReference type="MANE-Select" id="ENST00000526995.6">
    <property type="protein sequence ID" value="ENSP00000433623.1"/>
    <property type="RefSeq nucleotide sequence ID" value="NM_004620.4"/>
    <property type="RefSeq protein sequence ID" value="NP_004611.1"/>
</dbReference>
<dbReference type="UCSC" id="uc001mwq.3">
    <property type="organism name" value="human"/>
</dbReference>
<dbReference type="AGR" id="HGNC:12036"/>
<dbReference type="CTD" id="7189"/>
<dbReference type="DisGeNET" id="7189"/>
<dbReference type="GeneCards" id="TRAF6"/>
<dbReference type="HGNC" id="HGNC:12036">
    <property type="gene designation" value="TRAF6"/>
</dbReference>
<dbReference type="HPA" id="ENSG00000175104">
    <property type="expression patterns" value="Low tissue specificity"/>
</dbReference>
<dbReference type="MalaCards" id="TRAF6"/>
<dbReference type="MIM" id="602355">
    <property type="type" value="gene"/>
</dbReference>
<dbReference type="neXtProt" id="NX_Q9Y4K3"/>
<dbReference type="OpenTargets" id="ENSG00000175104"/>
<dbReference type="Orphanet" id="1810">
    <property type="disease" value="Autosomal dominant hypohidrotic ectodermal dysplasia"/>
</dbReference>
<dbReference type="PharmGKB" id="PA36713"/>
<dbReference type="VEuPathDB" id="HostDB:ENSG00000175104"/>
<dbReference type="eggNOG" id="KOG0297">
    <property type="taxonomic scope" value="Eukaryota"/>
</dbReference>
<dbReference type="GeneTree" id="ENSGT00940000155426"/>
<dbReference type="HOGENOM" id="CLU_021061_5_0_1"/>
<dbReference type="InParanoid" id="Q9Y4K3"/>
<dbReference type="OMA" id="FMHLQAL"/>
<dbReference type="OrthoDB" id="6475149at2759"/>
<dbReference type="PAN-GO" id="Q9Y4K3">
    <property type="GO annotations" value="9 GO annotations based on evolutionary models"/>
</dbReference>
<dbReference type="PhylomeDB" id="Q9Y4K3"/>
<dbReference type="TreeFam" id="TF321154"/>
<dbReference type="PathwayCommons" id="Q9Y4K3"/>
<dbReference type="Reactome" id="R-HSA-1257604">
    <property type="pathway name" value="PIP3 activates AKT signaling"/>
</dbReference>
<dbReference type="Reactome" id="R-HSA-166058">
    <property type="pathway name" value="MyD88:MAL(TIRAP) cascade initiated on plasma membrane"/>
</dbReference>
<dbReference type="Reactome" id="R-HSA-168638">
    <property type="pathway name" value="NOD1/2 Signaling Pathway"/>
</dbReference>
<dbReference type="Reactome" id="R-HSA-168927">
    <property type="pathway name" value="TICAM1, RIP1-mediated IKK complex recruitment"/>
</dbReference>
<dbReference type="Reactome" id="R-HSA-193692">
    <property type="pathway name" value="Regulated proteolysis of p75NTR"/>
</dbReference>
<dbReference type="Reactome" id="R-HSA-202424">
    <property type="pathway name" value="Downstream TCR signaling"/>
</dbReference>
<dbReference type="Reactome" id="R-HSA-205043">
    <property type="pathway name" value="NRIF signals cell death from the nucleus"/>
</dbReference>
<dbReference type="Reactome" id="R-HSA-209543">
    <property type="pathway name" value="p75NTR recruits signalling complexes"/>
</dbReference>
<dbReference type="Reactome" id="R-HSA-209560">
    <property type="pathway name" value="NF-kB is activated and signals survival"/>
</dbReference>
<dbReference type="Reactome" id="R-HSA-2871837">
    <property type="pathway name" value="FCERI mediated NF-kB activation"/>
</dbReference>
<dbReference type="Reactome" id="R-HSA-445989">
    <property type="pathway name" value="TAK1-dependent IKK and NF-kappa-B activation"/>
</dbReference>
<dbReference type="Reactome" id="R-HSA-450302">
    <property type="pathway name" value="activated TAK1 mediates p38 MAPK activation"/>
</dbReference>
<dbReference type="Reactome" id="R-HSA-450321">
    <property type="pathway name" value="JNK (c-Jun kinases) phosphorylation and activation mediated by activated human TAK1"/>
</dbReference>
<dbReference type="Reactome" id="R-HSA-5607764">
    <property type="pathway name" value="CLEC7A (Dectin-1) signaling"/>
</dbReference>
<dbReference type="Reactome" id="R-HSA-5689880">
    <property type="pathway name" value="Ub-specific processing proteases"/>
</dbReference>
<dbReference type="Reactome" id="R-HSA-5689896">
    <property type="pathway name" value="Ovarian tumor domain proteases"/>
</dbReference>
<dbReference type="Reactome" id="R-HSA-6811558">
    <property type="pathway name" value="PI5P, PP2A and IER3 Regulate PI3K/AKT Signaling"/>
</dbReference>
<dbReference type="Reactome" id="R-HSA-9014325">
    <property type="pathway name" value="TICAM1,TRAF6-dependent induction of TAK1 complex"/>
</dbReference>
<dbReference type="Reactome" id="R-HSA-9020702">
    <property type="pathway name" value="Interleukin-1 signaling"/>
</dbReference>
<dbReference type="Reactome" id="R-HSA-933541">
    <property type="pathway name" value="TRAF6 mediated IRF7 activation"/>
</dbReference>
<dbReference type="Reactome" id="R-HSA-933542">
    <property type="pathway name" value="TRAF6 mediated NF-kB activation"/>
</dbReference>
<dbReference type="Reactome" id="R-HSA-937039">
    <property type="pathway name" value="IRAK1 recruits IKK complex"/>
</dbReference>
<dbReference type="Reactome" id="R-HSA-937041">
    <property type="pathway name" value="IKK complex recruitment mediated by RIP1"/>
</dbReference>
<dbReference type="Reactome" id="R-HSA-937042">
    <property type="pathway name" value="IRAK2 mediated activation of TAK1 complex"/>
</dbReference>
<dbReference type="Reactome" id="R-HSA-937072">
    <property type="pathway name" value="TRAF6-mediated induction of TAK1 complex within TLR4 complex"/>
</dbReference>
<dbReference type="Reactome" id="R-HSA-9645460">
    <property type="pathway name" value="Alpha-protein kinase 1 signaling pathway"/>
</dbReference>
<dbReference type="Reactome" id="R-HSA-9692916">
    <property type="pathway name" value="SARS-CoV-1 activates/modulates innate immune responses"/>
</dbReference>
<dbReference type="Reactome" id="R-HSA-9705671">
    <property type="pathway name" value="SARS-CoV-2 activates/modulates innate and adaptive immune responses"/>
</dbReference>
<dbReference type="Reactome" id="R-HSA-975110">
    <property type="pathway name" value="TRAF6 mediated IRF7 activation in TLR7/8 or 9 signaling"/>
</dbReference>
<dbReference type="Reactome" id="R-HSA-975138">
    <property type="pathway name" value="TRAF6 mediated induction of NFkB and MAP kinases upon TLR7/8 or 9 activation"/>
</dbReference>
<dbReference type="Reactome" id="R-HSA-975144">
    <property type="pathway name" value="IRAK1 recruits IKK complex upon TLR7/8 or 9 stimulation"/>
</dbReference>
<dbReference type="Reactome" id="R-HSA-975155">
    <property type="pathway name" value="MyD88 dependent cascade initiated on endosome"/>
</dbReference>
<dbReference type="Reactome" id="R-HSA-975163">
    <property type="pathway name" value="IRAK2 mediated activation of TAK1 complex upon TLR7/8 or 9 stimulation"/>
</dbReference>
<dbReference type="Reactome" id="R-HSA-9758274">
    <property type="pathway name" value="Regulation of NF-kappa B signaling"/>
</dbReference>
<dbReference type="Reactome" id="R-HSA-975871">
    <property type="pathway name" value="MyD88 cascade initiated on plasma membrane"/>
</dbReference>
<dbReference type="SignaLink" id="Q9Y4K3"/>
<dbReference type="SIGNOR" id="Q9Y4K3"/>
<dbReference type="UniPathway" id="UPA00143"/>
<dbReference type="BioGRID-ORCS" id="7189">
    <property type="hits" value="38 hits in 1201 CRISPR screens"/>
</dbReference>
<dbReference type="ChiTaRS" id="TRAF6">
    <property type="organism name" value="human"/>
</dbReference>
<dbReference type="EvolutionaryTrace" id="Q9Y4K3"/>
<dbReference type="GeneWiki" id="TRAF6"/>
<dbReference type="GenomeRNAi" id="7189"/>
<dbReference type="Pharos" id="Q9Y4K3">
    <property type="development level" value="Tbio"/>
</dbReference>
<dbReference type="PRO" id="PR:Q9Y4K3"/>
<dbReference type="Proteomes" id="UP000005640">
    <property type="component" value="Chromosome 11"/>
</dbReference>
<dbReference type="RNAct" id="Q9Y4K3">
    <property type="molecule type" value="protein"/>
</dbReference>
<dbReference type="Bgee" id="ENSG00000175104">
    <property type="expression patterns" value="Expressed in secondary oocyte and 158 other cell types or tissues"/>
</dbReference>
<dbReference type="GO" id="GO:0035631">
    <property type="term" value="C:CD40 receptor complex"/>
    <property type="evidence" value="ECO:0000250"/>
    <property type="project" value="BHF-UCL"/>
</dbReference>
<dbReference type="GO" id="GO:0005938">
    <property type="term" value="C:cell cortex"/>
    <property type="evidence" value="ECO:0007669"/>
    <property type="project" value="UniProtKB-SubCell"/>
</dbReference>
<dbReference type="GO" id="GO:0005737">
    <property type="term" value="C:cytoplasm"/>
    <property type="evidence" value="ECO:0000314"/>
    <property type="project" value="UniProtKB"/>
</dbReference>
<dbReference type="GO" id="GO:0009898">
    <property type="term" value="C:cytoplasmic side of plasma membrane"/>
    <property type="evidence" value="ECO:0000250"/>
    <property type="project" value="BHF-UCL"/>
</dbReference>
<dbReference type="GO" id="GO:0005829">
    <property type="term" value="C:cytosol"/>
    <property type="evidence" value="ECO:0000304"/>
    <property type="project" value="Reactome"/>
</dbReference>
<dbReference type="GO" id="GO:0010008">
    <property type="term" value="C:endosome membrane"/>
    <property type="evidence" value="ECO:0000304"/>
    <property type="project" value="Reactome"/>
</dbReference>
<dbReference type="GO" id="GO:0031234">
    <property type="term" value="C:extrinsic component of cytoplasmic side of plasma membrane"/>
    <property type="evidence" value="ECO:0000305"/>
    <property type="project" value="UniProt"/>
</dbReference>
<dbReference type="GO" id="GO:0098978">
    <property type="term" value="C:glutamatergic synapse"/>
    <property type="evidence" value="ECO:0000318"/>
    <property type="project" value="GO_Central"/>
</dbReference>
<dbReference type="GO" id="GO:0005811">
    <property type="term" value="C:lipid droplet"/>
    <property type="evidence" value="ECO:0000250"/>
    <property type="project" value="UniProtKB"/>
</dbReference>
<dbReference type="GO" id="GO:0005634">
    <property type="term" value="C:nucleus"/>
    <property type="evidence" value="ECO:0000314"/>
    <property type="project" value="UniProtKB"/>
</dbReference>
<dbReference type="GO" id="GO:0048471">
    <property type="term" value="C:perinuclear region of cytoplasm"/>
    <property type="evidence" value="ECO:0000314"/>
    <property type="project" value="BHF-UCL"/>
</dbReference>
<dbReference type="GO" id="GO:0005886">
    <property type="term" value="C:plasma membrane"/>
    <property type="evidence" value="ECO:0000314"/>
    <property type="project" value="UniProtKB"/>
</dbReference>
<dbReference type="GO" id="GO:0032991">
    <property type="term" value="C:protein-containing complex"/>
    <property type="evidence" value="ECO:0000314"/>
    <property type="project" value="MGI"/>
</dbReference>
<dbReference type="GO" id="GO:0042826">
    <property type="term" value="F:histone deacetylase binding"/>
    <property type="evidence" value="ECO:0000353"/>
    <property type="project" value="UniProtKB"/>
</dbReference>
<dbReference type="GO" id="GO:0042802">
    <property type="term" value="F:identical protein binding"/>
    <property type="evidence" value="ECO:0000353"/>
    <property type="project" value="IntAct"/>
</dbReference>
<dbReference type="GO" id="GO:0043422">
    <property type="term" value="F:protein kinase B binding"/>
    <property type="evidence" value="ECO:0000353"/>
    <property type="project" value="UniProtKB"/>
</dbReference>
<dbReference type="GO" id="GO:0030674">
    <property type="term" value="F:protein-macromolecule adaptor activity"/>
    <property type="evidence" value="ECO:0000314"/>
    <property type="project" value="UniProt"/>
</dbReference>
<dbReference type="GO" id="GO:0035591">
    <property type="term" value="F:signaling adaptor activity"/>
    <property type="evidence" value="ECO:0000318"/>
    <property type="project" value="GO_Central"/>
</dbReference>
<dbReference type="GO" id="GO:0005164">
    <property type="term" value="F:tumor necrosis factor receptor binding"/>
    <property type="evidence" value="ECO:0007669"/>
    <property type="project" value="InterPro"/>
</dbReference>
<dbReference type="GO" id="GO:0031624">
    <property type="term" value="F:ubiquitin conjugating enzyme binding"/>
    <property type="evidence" value="ECO:0000314"/>
    <property type="project" value="MGI"/>
</dbReference>
<dbReference type="GO" id="GO:0061630">
    <property type="term" value="F:ubiquitin protein ligase activity"/>
    <property type="evidence" value="ECO:0000314"/>
    <property type="project" value="UniProtKB"/>
</dbReference>
<dbReference type="GO" id="GO:0004842">
    <property type="term" value="F:ubiquitin-protein transferase activity"/>
    <property type="evidence" value="ECO:0000269"/>
    <property type="project" value="Reactome"/>
</dbReference>
<dbReference type="GO" id="GO:0034450">
    <property type="term" value="F:ubiquitin-ubiquitin ligase activity"/>
    <property type="evidence" value="ECO:0000314"/>
    <property type="project" value="UniProtKB"/>
</dbReference>
<dbReference type="GO" id="GO:0008270">
    <property type="term" value="F:zinc ion binding"/>
    <property type="evidence" value="ECO:0007669"/>
    <property type="project" value="UniProtKB-KW"/>
</dbReference>
<dbReference type="GO" id="GO:0032147">
    <property type="term" value="P:activation of protein kinase activity"/>
    <property type="evidence" value="ECO:0000314"/>
    <property type="project" value="UniProtKB"/>
</dbReference>
<dbReference type="GO" id="GO:0019886">
    <property type="term" value="P:antigen processing and presentation of exogenous peptide antigen via MHC class II"/>
    <property type="evidence" value="ECO:0007669"/>
    <property type="project" value="Ensembl"/>
</dbReference>
<dbReference type="GO" id="GO:0140374">
    <property type="term" value="P:antiviral innate immune response"/>
    <property type="evidence" value="ECO:0000314"/>
    <property type="project" value="UniProt"/>
</dbReference>
<dbReference type="GO" id="GO:0000045">
    <property type="term" value="P:autophagosome assembly"/>
    <property type="evidence" value="ECO:0000314"/>
    <property type="project" value="UniProt"/>
</dbReference>
<dbReference type="GO" id="GO:0045453">
    <property type="term" value="P:bone resorption"/>
    <property type="evidence" value="ECO:0007669"/>
    <property type="project" value="Ensembl"/>
</dbReference>
<dbReference type="GO" id="GO:0007249">
    <property type="term" value="P:canonical NF-kappaB signal transduction"/>
    <property type="evidence" value="ECO:0000314"/>
    <property type="project" value="UniProt"/>
</dbReference>
<dbReference type="GO" id="GO:0023035">
    <property type="term" value="P:CD40 signaling pathway"/>
    <property type="evidence" value="ECO:0000314"/>
    <property type="project" value="UniProt"/>
</dbReference>
<dbReference type="GO" id="GO:0071345">
    <property type="term" value="P:cellular response to cytokine stimulus"/>
    <property type="evidence" value="ECO:0000315"/>
    <property type="project" value="ARUK-UCL"/>
</dbReference>
<dbReference type="GO" id="GO:0071222">
    <property type="term" value="P:cellular response to lipopolysaccharide"/>
    <property type="evidence" value="ECO:0000314"/>
    <property type="project" value="MGI"/>
</dbReference>
<dbReference type="GO" id="GO:0002753">
    <property type="term" value="P:cytoplasmic pattern recognition receptor signaling pathway"/>
    <property type="evidence" value="ECO:0000314"/>
    <property type="project" value="UniProt"/>
</dbReference>
<dbReference type="GO" id="GO:0006974">
    <property type="term" value="P:DNA damage response"/>
    <property type="evidence" value="ECO:0007669"/>
    <property type="project" value="UniProtKB-KW"/>
</dbReference>
<dbReference type="GO" id="GO:0038095">
    <property type="term" value="P:Fc-epsilon receptor signaling pathway"/>
    <property type="evidence" value="ECO:0000304"/>
    <property type="project" value="Reactome"/>
</dbReference>
<dbReference type="GO" id="GO:0001701">
    <property type="term" value="P:in utero embryonic development"/>
    <property type="evidence" value="ECO:0007669"/>
    <property type="project" value="Ensembl"/>
</dbReference>
<dbReference type="GO" id="GO:0045087">
    <property type="term" value="P:innate immune response"/>
    <property type="evidence" value="ECO:0000318"/>
    <property type="project" value="GO_Central"/>
</dbReference>
<dbReference type="GO" id="GO:0070498">
    <property type="term" value="P:interleukin-1-mediated signaling pathway"/>
    <property type="evidence" value="ECO:0000304"/>
    <property type="project" value="Reactome"/>
</dbReference>
<dbReference type="GO" id="GO:0097400">
    <property type="term" value="P:interleukin-17-mediated signaling pathway"/>
    <property type="evidence" value="ECO:0007669"/>
    <property type="project" value="Ensembl"/>
</dbReference>
<dbReference type="GO" id="GO:0038173">
    <property type="term" value="P:interleukin-17A-mediated signaling pathway"/>
    <property type="evidence" value="ECO:0000314"/>
    <property type="project" value="UniProt"/>
</dbReference>
<dbReference type="GO" id="GO:0038172">
    <property type="term" value="P:interleukin-33-mediated signaling pathway"/>
    <property type="evidence" value="ECO:0000315"/>
    <property type="project" value="UniProt"/>
</dbReference>
<dbReference type="GO" id="GO:0031663">
    <property type="term" value="P:lipopolysaccharide-mediated signaling pathway"/>
    <property type="evidence" value="ECO:0000318"/>
    <property type="project" value="GO_Central"/>
</dbReference>
<dbReference type="GO" id="GO:0002755">
    <property type="term" value="P:MyD88-dependent toll-like receptor signaling pathway"/>
    <property type="evidence" value="ECO:0000304"/>
    <property type="project" value="Reactome"/>
</dbReference>
<dbReference type="GO" id="GO:0043011">
    <property type="term" value="P:myeloid dendritic cell differentiation"/>
    <property type="evidence" value="ECO:0007669"/>
    <property type="project" value="Ensembl"/>
</dbReference>
<dbReference type="GO" id="GO:0045892">
    <property type="term" value="P:negative regulation of DNA-templated transcription"/>
    <property type="evidence" value="ECO:0000315"/>
    <property type="project" value="UniProtKB"/>
</dbReference>
<dbReference type="GO" id="GO:0000122">
    <property type="term" value="P:negative regulation of transcription by RNA polymerase II"/>
    <property type="evidence" value="ECO:0000315"/>
    <property type="project" value="UniProtKB"/>
</dbReference>
<dbReference type="GO" id="GO:0001843">
    <property type="term" value="P:neural tube closure"/>
    <property type="evidence" value="ECO:0007669"/>
    <property type="project" value="Ensembl"/>
</dbReference>
<dbReference type="GO" id="GO:0038061">
    <property type="term" value="P:non-canonical NF-kappaB signal transduction"/>
    <property type="evidence" value="ECO:0000314"/>
    <property type="project" value="UniProt"/>
</dbReference>
<dbReference type="GO" id="GO:0042475">
    <property type="term" value="P:odontogenesis of dentin-containing tooth"/>
    <property type="evidence" value="ECO:0007669"/>
    <property type="project" value="Ensembl"/>
</dbReference>
<dbReference type="GO" id="GO:0001503">
    <property type="term" value="P:ossification"/>
    <property type="evidence" value="ECO:0007669"/>
    <property type="project" value="UniProtKB-KW"/>
</dbReference>
<dbReference type="GO" id="GO:0030316">
    <property type="term" value="P:osteoclast differentiation"/>
    <property type="evidence" value="ECO:0007669"/>
    <property type="project" value="Ensembl"/>
</dbReference>
<dbReference type="GO" id="GO:0043123">
    <property type="term" value="P:positive regulation of canonical NF-kappaB signal transduction"/>
    <property type="evidence" value="ECO:0000314"/>
    <property type="project" value="UniProtKB"/>
</dbReference>
<dbReference type="GO" id="GO:0032735">
    <property type="term" value="P:positive regulation of interleukin-12 production"/>
    <property type="evidence" value="ECO:0007669"/>
    <property type="project" value="Ensembl"/>
</dbReference>
<dbReference type="GO" id="GO:0032743">
    <property type="term" value="P:positive regulation of interleukin-2 production"/>
    <property type="evidence" value="ECO:0000315"/>
    <property type="project" value="UniProtKB"/>
</dbReference>
<dbReference type="GO" id="GO:0032755">
    <property type="term" value="P:positive regulation of interleukin-6 production"/>
    <property type="evidence" value="ECO:0007669"/>
    <property type="project" value="Ensembl"/>
</dbReference>
<dbReference type="GO" id="GO:0046330">
    <property type="term" value="P:positive regulation of JNK cascade"/>
    <property type="evidence" value="ECO:0000314"/>
    <property type="project" value="BHF-UCL"/>
</dbReference>
<dbReference type="GO" id="GO:0043507">
    <property type="term" value="P:positive regulation of JUN kinase activity"/>
    <property type="evidence" value="ECO:0000303"/>
    <property type="project" value="UniProtKB"/>
</dbReference>
<dbReference type="GO" id="GO:1904996">
    <property type="term" value="P:positive regulation of leukocyte adhesion to vascular endothelial cell"/>
    <property type="evidence" value="ECO:0000315"/>
    <property type="project" value="ARUK-UCL"/>
</dbReference>
<dbReference type="GO" id="GO:0031666">
    <property type="term" value="P:positive regulation of lipopolysaccharide-mediated signaling pathway"/>
    <property type="evidence" value="ECO:0007669"/>
    <property type="project" value="Ensembl"/>
</dbReference>
<dbReference type="GO" id="GO:0051092">
    <property type="term" value="P:positive regulation of NF-kappaB transcription factor activity"/>
    <property type="evidence" value="ECO:0000314"/>
    <property type="project" value="UniProtKB"/>
</dbReference>
<dbReference type="GO" id="GO:0045672">
    <property type="term" value="P:positive regulation of osteoclast differentiation"/>
    <property type="evidence" value="ECO:0000314"/>
    <property type="project" value="UniProtKB"/>
</dbReference>
<dbReference type="GO" id="GO:0031398">
    <property type="term" value="P:positive regulation of protein ubiquitination"/>
    <property type="evidence" value="ECO:0000303"/>
    <property type="project" value="BHF-UCL"/>
</dbReference>
<dbReference type="GO" id="GO:0002726">
    <property type="term" value="P:positive regulation of T cell cytokine production"/>
    <property type="evidence" value="ECO:0000315"/>
    <property type="project" value="UniProtKB"/>
</dbReference>
<dbReference type="GO" id="GO:0042102">
    <property type="term" value="P:positive regulation of T cell proliferation"/>
    <property type="evidence" value="ECO:0007669"/>
    <property type="project" value="Ensembl"/>
</dbReference>
<dbReference type="GO" id="GO:0045944">
    <property type="term" value="P:positive regulation of transcription by RNA polymerase II"/>
    <property type="evidence" value="ECO:0000314"/>
    <property type="project" value="BHF-UCL"/>
</dbReference>
<dbReference type="GO" id="GO:0032481">
    <property type="term" value="P:positive regulation of type I interferon production"/>
    <property type="evidence" value="ECO:0007669"/>
    <property type="project" value="Ensembl"/>
</dbReference>
<dbReference type="GO" id="GO:0051865">
    <property type="term" value="P:protein autoubiquitination"/>
    <property type="evidence" value="ECO:0000314"/>
    <property type="project" value="UniProtKB"/>
</dbReference>
<dbReference type="GO" id="GO:0141198">
    <property type="term" value="P:protein branched polyubiquitination"/>
    <property type="evidence" value="ECO:0000314"/>
    <property type="project" value="UniProtKB"/>
</dbReference>
<dbReference type="GO" id="GO:0070534">
    <property type="term" value="P:protein K63-linked ubiquitination"/>
    <property type="evidence" value="ECO:0000314"/>
    <property type="project" value="UniProtKB"/>
</dbReference>
<dbReference type="GO" id="GO:0000209">
    <property type="term" value="P:protein polyubiquitination"/>
    <property type="evidence" value="ECO:0000314"/>
    <property type="project" value="UniProtKB"/>
</dbReference>
<dbReference type="GO" id="GO:0042981">
    <property type="term" value="P:regulation of apoptotic process"/>
    <property type="evidence" value="ECO:0007669"/>
    <property type="project" value="InterPro"/>
</dbReference>
<dbReference type="GO" id="GO:0043122">
    <property type="term" value="P:regulation of canonical NF-kappaB signal transduction"/>
    <property type="evidence" value="ECO:0000318"/>
    <property type="project" value="GO_Central"/>
</dbReference>
<dbReference type="GO" id="GO:0002637">
    <property type="term" value="P:regulation of immunoglobulin production"/>
    <property type="evidence" value="ECO:0007669"/>
    <property type="project" value="Ensembl"/>
</dbReference>
<dbReference type="GO" id="GO:0098696">
    <property type="term" value="P:regulation of neurotransmitter receptor localization to postsynaptic specialization membrane"/>
    <property type="evidence" value="ECO:0007669"/>
    <property type="project" value="Ensembl"/>
</dbReference>
<dbReference type="GO" id="GO:0070555">
    <property type="term" value="P:response to interleukin-1"/>
    <property type="evidence" value="ECO:0000314"/>
    <property type="project" value="UniProtKB"/>
</dbReference>
<dbReference type="GO" id="GO:0002223">
    <property type="term" value="P:stimulatory C-type lectin receptor signaling pathway"/>
    <property type="evidence" value="ECO:0000304"/>
    <property type="project" value="Reactome"/>
</dbReference>
<dbReference type="GO" id="GO:0050852">
    <property type="term" value="P:T cell receptor signaling pathway"/>
    <property type="evidence" value="ECO:0000314"/>
    <property type="project" value="UniProt"/>
</dbReference>
<dbReference type="GO" id="GO:0042088">
    <property type="term" value="P:T-helper 1 type immune response"/>
    <property type="evidence" value="ECO:0007669"/>
    <property type="project" value="Ensembl"/>
</dbReference>
<dbReference type="GO" id="GO:0034138">
    <property type="term" value="P:toll-like receptor 3 signaling pathway"/>
    <property type="evidence" value="ECO:0000304"/>
    <property type="project" value="Reactome"/>
</dbReference>
<dbReference type="GO" id="GO:0034142">
    <property type="term" value="P:toll-like receptor 4 signaling pathway"/>
    <property type="evidence" value="ECO:0000314"/>
    <property type="project" value="UniProt"/>
</dbReference>
<dbReference type="GO" id="GO:0035666">
    <property type="term" value="P:TRIF-dependent toll-like receptor signaling pathway"/>
    <property type="evidence" value="ECO:0000304"/>
    <property type="project" value="Reactome"/>
</dbReference>
<dbReference type="GO" id="GO:0033209">
    <property type="term" value="P:tumor necrosis factor-mediated signaling pathway"/>
    <property type="evidence" value="ECO:0000315"/>
    <property type="project" value="BHF-UCL"/>
</dbReference>
<dbReference type="CDD" id="cd03776">
    <property type="entry name" value="MATH_TRAF6"/>
    <property type="match status" value="1"/>
</dbReference>
<dbReference type="CDD" id="cd16643">
    <property type="entry name" value="mRING-HC-C3HC3D_TRAF6"/>
    <property type="match status" value="1"/>
</dbReference>
<dbReference type="FunFam" id="2.60.210.10:FF:000010">
    <property type="entry name" value="TNF receptor-associated factor"/>
    <property type="match status" value="1"/>
</dbReference>
<dbReference type="FunFam" id="3.30.40.10:FF:000179">
    <property type="entry name" value="TNF receptor-associated factor"/>
    <property type="match status" value="1"/>
</dbReference>
<dbReference type="FunFam" id="3.30.40.10:FF:000211">
    <property type="entry name" value="TNF receptor-associated factor"/>
    <property type="match status" value="1"/>
</dbReference>
<dbReference type="FunFam" id="3.30.40.10:FF:000289">
    <property type="entry name" value="TNF receptor-associated factor"/>
    <property type="match status" value="1"/>
</dbReference>
<dbReference type="Gene3D" id="2.60.210.10">
    <property type="entry name" value="Apoptosis, Tumor Necrosis Factor Receptor Associated Protein 2, Chain A"/>
    <property type="match status" value="1"/>
</dbReference>
<dbReference type="Gene3D" id="3.30.40.10">
    <property type="entry name" value="Zinc/RING finger domain, C3HC4 (zinc finger)"/>
    <property type="match status" value="3"/>
</dbReference>
<dbReference type="IDEAL" id="IID00744"/>
<dbReference type="InterPro" id="IPR002083">
    <property type="entry name" value="MATH/TRAF_dom"/>
</dbReference>
<dbReference type="InterPro" id="IPR012227">
    <property type="entry name" value="TNF_rcpt-assoc_TRAF_met"/>
</dbReference>
<dbReference type="InterPro" id="IPR008974">
    <property type="entry name" value="TRAF-like"/>
</dbReference>
<dbReference type="InterPro" id="IPR049342">
    <property type="entry name" value="TRAF1-6_MATH_dom"/>
</dbReference>
<dbReference type="InterPro" id="IPR037309">
    <property type="entry name" value="TRAF6_MATH"/>
</dbReference>
<dbReference type="InterPro" id="IPR027139">
    <property type="entry name" value="TRAF6_RING-HC"/>
</dbReference>
<dbReference type="InterPro" id="IPR041310">
    <property type="entry name" value="TRAF6_Z2"/>
</dbReference>
<dbReference type="InterPro" id="IPR001841">
    <property type="entry name" value="Znf_RING"/>
</dbReference>
<dbReference type="InterPro" id="IPR013083">
    <property type="entry name" value="Znf_RING/FYVE/PHD"/>
</dbReference>
<dbReference type="InterPro" id="IPR017907">
    <property type="entry name" value="Znf_RING_CS"/>
</dbReference>
<dbReference type="InterPro" id="IPR001293">
    <property type="entry name" value="Znf_TRAF"/>
</dbReference>
<dbReference type="PANTHER" id="PTHR10131">
    <property type="entry name" value="TNF RECEPTOR ASSOCIATED FACTOR"/>
    <property type="match status" value="1"/>
</dbReference>
<dbReference type="PANTHER" id="PTHR10131:SF152">
    <property type="entry name" value="TNF RECEPTOR-ASSOCIATED FACTOR 6"/>
    <property type="match status" value="1"/>
</dbReference>
<dbReference type="Pfam" id="PF21355">
    <property type="entry name" value="TRAF-mep_MATH"/>
    <property type="match status" value="1"/>
</dbReference>
<dbReference type="Pfam" id="PF18048">
    <property type="entry name" value="TRAF6_Z2"/>
    <property type="match status" value="1"/>
</dbReference>
<dbReference type="Pfam" id="PF13923">
    <property type="entry name" value="zf-C3HC4_2"/>
    <property type="match status" value="1"/>
</dbReference>
<dbReference type="Pfam" id="PF02176">
    <property type="entry name" value="zf-TRAF"/>
    <property type="match status" value="1"/>
</dbReference>
<dbReference type="PIRSF" id="PIRSF015614">
    <property type="entry name" value="TRAF"/>
    <property type="match status" value="1"/>
</dbReference>
<dbReference type="SMART" id="SM00061">
    <property type="entry name" value="MATH"/>
    <property type="match status" value="1"/>
</dbReference>
<dbReference type="SMART" id="SM00184">
    <property type="entry name" value="RING"/>
    <property type="match status" value="1"/>
</dbReference>
<dbReference type="SUPFAM" id="SSF57850">
    <property type="entry name" value="RING/U-box"/>
    <property type="match status" value="1"/>
</dbReference>
<dbReference type="SUPFAM" id="SSF49599">
    <property type="entry name" value="TRAF domain-like"/>
    <property type="match status" value="3"/>
</dbReference>
<dbReference type="PROSITE" id="PS50144">
    <property type="entry name" value="MATH"/>
    <property type="match status" value="1"/>
</dbReference>
<dbReference type="PROSITE" id="PS00518">
    <property type="entry name" value="ZF_RING_1"/>
    <property type="match status" value="1"/>
</dbReference>
<dbReference type="PROSITE" id="PS50089">
    <property type="entry name" value="ZF_RING_2"/>
    <property type="match status" value="1"/>
</dbReference>
<dbReference type="PROSITE" id="PS50145">
    <property type="entry name" value="ZF_TRAF"/>
    <property type="match status" value="2"/>
</dbReference>
<name>TRAF6_HUMAN</name>
<organism>
    <name type="scientific">Homo sapiens</name>
    <name type="common">Human</name>
    <dbReference type="NCBI Taxonomy" id="9606"/>
    <lineage>
        <taxon>Eukaryota</taxon>
        <taxon>Metazoa</taxon>
        <taxon>Chordata</taxon>
        <taxon>Craniata</taxon>
        <taxon>Vertebrata</taxon>
        <taxon>Euteleostomi</taxon>
        <taxon>Mammalia</taxon>
        <taxon>Eutheria</taxon>
        <taxon>Euarchontoglires</taxon>
        <taxon>Primates</taxon>
        <taxon>Haplorrhini</taxon>
        <taxon>Catarrhini</taxon>
        <taxon>Hominidae</taxon>
        <taxon>Homo</taxon>
    </lineage>
</organism>
<comment type="function">
    <text evidence="2 8 10 11 12 13 14 15 16 17 18 19 20 22 29 30 32 33">E3 ubiquitin ligase that, together with UBE2N and UBE2V1, mediates the synthesis of 'Lys-63'-linked-polyubiquitin chains conjugated to proteins, such as ECSIT, IKBKG, IRAK1, AKT1 and AKT2 (PubMed:11057907, PubMed:18347055, PubMed:19465916, PubMed:19713527, PubMed:27746020, PubMed:31620128). Also mediates ubiquitination of free/unanchored polyubiquitin chain that leads to MAP3K7 activation (PubMed:19675569). Leads to the activation of NF-kappa-B and JUN (PubMed:16378096, PubMed:17135271, PubMed:17703191). Seems to also play a role in dendritic cells (DCs) maturation and/or activation (By similarity). Represses c-Myb-mediated transactivation, in B-lymphocytes (PubMed:18093978, PubMed:18758450). Adapter protein that seems to play a role in signal transduction initiated via TNF receptor, IL-1 receptor and IL-17 receptor (PubMed:12140561, PubMed:19825828, PubMed:8837778). Regulates osteoclast differentiation by mediating the activation of adapter protein complex 1 (AP-1) and NF-kappa-B, in response to RANK-L stimulation (By similarity). Together with MAP3K8, mediates CD40 signals that activate ERK in B-cells and macrophages, and thus may play a role in the regulation of immunoglobulin production (By similarity). Acts as a regulator of the JNK and NF-kappa-B signaling pathways by initiating assembly of heterotypic 'Lys-63'-/'Lys-48'-linked branched ubiquitin chains that are then recognized by TAB2: TRAF6 catalyzes initial 'Lys-63'-linked-polyubiquitin chains that are then branched via 'Lys-48'-linked polyubiquitin by HUWE1 (PubMed:27746020). 'Lys-63'-/'Lys-48'-linked branched ubiquitin chains protect 'Lys-63'-linkages from CYLD deubiquitination (PubMed:27746020). Participates also in the TCR signaling by ubiquitinating LAT (PubMed:23514740, PubMed:25907557).</text>
</comment>
<comment type="catalytic activity">
    <reaction evidence="12 19 22 30">
        <text>S-ubiquitinyl-[E2 ubiquitin-conjugating enzyme]-L-cysteine + [acceptor protein]-L-lysine = [E2 ubiquitin-conjugating enzyme]-L-cysteine + N(6)-ubiquitinyl-[acceptor protein]-L-lysine.</text>
        <dbReference type="EC" id="2.3.2.27"/>
    </reaction>
</comment>
<comment type="pathway">
    <text evidence="22 30">Protein modification; protein ubiquitination.</text>
</comment>
<comment type="subunit">
    <text evidence="2 7 13 20 21 23 24 26 27 28 31 32">Homotrimer. Homooligomer. N-terminal region is dimeric while C-terminal region is trimeric; maybe providing a mode of oligomerization. Upon IL1B treatment, forms a complex with PELI1, IRAK1, IRAK4 and MYD88; this complex recruits MAP3K7/TAK1, TAB1 and TAB2 to mediate NF-kappa-B activation. Direct binding of SMAD6 to PELI1 prevents the complex formation and hence negatively regulates IL1R-TLR signaling and eventually NF-kappa-B-mediated gene expression. Binds to TNFRSF5/CD40 and TNFRSF11A/RANK. Associates with NGFR, TNFRSF17, IRAK2, IRAK3, RIPK2, MAP3K1, MAP3K5, MAP3K14, CSK, TRAF, TRAF-interacting protein TRIP and TNF receptor associated protein TDP2. Interacts with IL17R. Interacts with SQSTM1 bridging NTRK1 and NGFR. Forms a ternary complex with SQSTM1 and PRKCZ (By similarity). Interacts with PELI2 and PELI3. Binds UBE2V1. Interacts with TAX1BP1; this interaction mediates deubiquitination of TRAF6 and inhibition of NF-kappa-B activation (PubMed:10920205, PubMed:17703191). Interacts with ZNF675. Interacts with ARRB1 and ARRB2. Interacts with MAP3K7 and TAB1/MAP3K7IP1; during IL-1 signaling. Interacts with UBE2N. Interacts with TGFBR1, HDAC1 and RANGAP1. Interacts with AKT1, AKT2 and AKT3. Interacts (via TRAF domains) with NUMBL (via C-terminal). Interacts with RBCK1. Interacts with LIMD1 (via LIM domains) (By similarity). Interacts with RSAD2/viperin (By similarity). Interacts (via C-terminus) with EIF2AK2/PKR (via the kinase catalytic domain) (By similarity). Interacts with ZFAND5. Interacts with IL1RL1. Interacts with TRAFD1. Interacts with AJUBA. Interacts with MAVS/IPS1. Interacts (via TRAF domains) with DYNC2I2 (via WD domains). Interacts with IFIT3 (via N-terminus). Interacts with TICAM2. Interacts with CARD14. Interacts with CD40 and MAP3K8; the interaction is required for ERK activation (By similarity). Interacts with TICAM1 and this interaction is enhanced in the presence of WDFY1 (PubMed:25736436). Interacts with TANK; this interaction increases in response to DNA damage (PubMed:25861989). Interacts with USP10; this interaction increases in response to DNA damage (PubMed:25861989). Interacts with ZC3H12A; this interaction increases in response to DNA damage and is stimulated by TANK (PubMed:25861989). Interacts with WDFY3 (By similarity). Interacts with TRIM13 (PubMed:28087809). Interacts with GPS2 (By similarity). Interacts (via C-terminus) with SASH1 (PubMed:23776175). Interacts with LRRC19 (PubMed:25026888). Interacts with IL17RA and TRAF3IP2. Interacts with TOMM70 (PubMed:20628368). Interacts with AMBRA1; interaction is required to mediate 'Lys-63'-linked ubiquitination of ULK1 (PubMed:23524951). Interacts with CRBN; this interaction inhibits TLR4-mediated signaling by preventing TRAF6-mediated ubiquitination of ECSIT (PubMed:31620128).</text>
</comment>
<comment type="interaction">
    <interactant intactId="EBI-359276">
        <id>Q9Y4K3</id>
    </interactant>
    <interactant intactId="EBI-16042318">
        <id>Q9C0C7-3</id>
        <label>AMBRA1</label>
    </interactant>
    <organismsDiffer>false</organismsDiffer>
    <experiments>2</experiments>
</comment>
<comment type="interaction">
    <interactant intactId="EBI-359276">
        <id>Q9Y4K3</id>
    </interactant>
    <interactant intactId="EBI-13085322">
        <id>Q8IWQ3-3</id>
        <label>BRSK2</label>
    </interactant>
    <organismsDiffer>false</organismsDiffer>
    <experiments>3</experiments>
</comment>
<comment type="interaction">
    <interactant intactId="EBI-359276">
        <id>Q9Y4K3</id>
    </interactant>
    <interactant intactId="EBI-525714">
        <id>P25942</id>
        <label>CD40</label>
    </interactant>
    <organismsDiffer>false</organismsDiffer>
    <experiments>2</experiments>
</comment>
<comment type="interaction">
    <interactant intactId="EBI-359276">
        <id>Q9Y4K3</id>
    </interactant>
    <interactant intactId="EBI-526033">
        <id>Q9HAV5</id>
        <label>EDA2R</label>
    </interactant>
    <organismsDiffer>false</organismsDiffer>
    <experiments>3</experiments>
</comment>
<comment type="interaction">
    <interactant intactId="EBI-359276">
        <id>Q9Y4K3</id>
    </interactant>
    <interactant intactId="EBI-2949647">
        <id>Q8WWZ3</id>
        <label>EDARADD</label>
    </interactant>
    <organismsDiffer>false</organismsDiffer>
    <experiments>5</experiments>
</comment>
<comment type="interaction">
    <interactant intactId="EBI-359276">
        <id>Q9Y4K3</id>
    </interactant>
    <interactant intactId="EBI-525905">
        <id>P14778</id>
        <label>IL1R1</label>
    </interactant>
    <organismsDiffer>false</organismsDiffer>
    <experiments>2</experiments>
</comment>
<comment type="interaction">
    <interactant intactId="EBI-359276">
        <id>Q9Y4K3</id>
    </interactant>
    <interactant intactId="EBI-10220600">
        <id>Q8NA54</id>
        <label>IQUB</label>
    </interactant>
    <organismsDiffer>false</organismsDiffer>
    <experiments>3</experiments>
</comment>
<comment type="interaction">
    <interactant intactId="EBI-359276">
        <id>Q9Y4K3</id>
    </interactant>
    <interactant intactId="EBI-358664">
        <id>P51617</id>
        <label>IRAK1</label>
    </interactant>
    <organismsDiffer>false</organismsDiffer>
    <experiments>3</experiments>
</comment>
<comment type="interaction">
    <interactant intactId="EBI-359276">
        <id>Q9Y4K3</id>
    </interactant>
    <interactant intactId="EBI-447733">
        <id>O43187</id>
        <label>IRAK2</label>
    </interactant>
    <organismsDiffer>false</organismsDiffer>
    <experiments>4</experiments>
</comment>
<comment type="interaction">
    <interactant intactId="EBI-359276">
        <id>Q9Y4K3</id>
    </interactant>
    <interactant intactId="EBI-447690">
        <id>Q9Y616</id>
        <label>IRAK3</label>
    </interactant>
    <organismsDiffer>false</organismsDiffer>
    <experiments>3</experiments>
</comment>
<comment type="interaction">
    <interactant intactId="EBI-359276">
        <id>Q9Y4K3</id>
    </interactant>
    <interactant intactId="EBI-739832">
        <id>Q8TBB1</id>
        <label>LNX1</label>
    </interactant>
    <organismsDiffer>false</organismsDiffer>
    <experiments>3</experiments>
</comment>
<comment type="interaction">
    <interactant intactId="EBI-359276">
        <id>Q9Y4K3</id>
    </interactant>
    <interactant intactId="EBI-1047372">
        <id>Q9UDY8</id>
        <label>MALT1</label>
    </interactant>
    <organismsDiffer>false</organismsDiffer>
    <experiments>5</experiments>
</comment>
<comment type="interaction">
    <interactant intactId="EBI-359276">
        <id>Q9Y4K3</id>
    </interactant>
    <interactant intactId="EBI-358684">
        <id>O43318</id>
        <label>MAP3K7</label>
    </interactant>
    <organismsDiffer>false</organismsDiffer>
    <experiments>2</experiments>
</comment>
<comment type="interaction">
    <interactant intactId="EBI-359276">
        <id>Q9Y4K3</id>
    </interactant>
    <interactant intactId="EBI-995373">
        <id>Q7Z434</id>
        <label>MAVS</label>
    </interactant>
    <organismsDiffer>false</organismsDiffer>
    <experiments>4</experiments>
</comment>
<comment type="interaction">
    <interactant intactId="EBI-359276">
        <id>Q9Y4K3</id>
    </interactant>
    <interactant intactId="EBI-748397">
        <id>P50222</id>
        <label>MEOX2</label>
    </interactant>
    <organismsDiffer>false</organismsDiffer>
    <experiments>3</experiments>
</comment>
<comment type="interaction">
    <interactant intactId="EBI-359276">
        <id>Q9Y4K3</id>
    </interactant>
    <interactant intactId="EBI-11980301">
        <id>Q8N3F0</id>
        <label>MTURN</label>
    </interactant>
    <organismsDiffer>false</organismsDiffer>
    <experiments>3</experiments>
</comment>
<comment type="interaction">
    <interactant intactId="EBI-359276">
        <id>Q9Y4K3</id>
    </interactant>
    <interactant intactId="EBI-746259">
        <id>Q96DC9</id>
        <label>OTUB2</label>
    </interactant>
    <organismsDiffer>false</organismsDiffer>
    <experiments>3</experiments>
</comment>
<comment type="interaction">
    <interactant intactId="EBI-359276">
        <id>Q9Y4K3</id>
    </interactant>
    <interactant intactId="EBI-742388">
        <id>Q9H8W4</id>
        <label>PLEKHF2</label>
    </interactant>
    <organismsDiffer>false</organismsDiffer>
    <experiments>3</experiments>
</comment>
<comment type="interaction">
    <interactant intactId="EBI-359276">
        <id>Q9Y4K3</id>
    </interactant>
    <interactant intactId="EBI-741774">
        <id>Q9UNA4</id>
        <label>POLI</label>
    </interactant>
    <organismsDiffer>false</organismsDiffer>
    <experiments>3</experiments>
</comment>
<comment type="interaction">
    <interactant intactId="EBI-359276">
        <id>Q9Y4K3</id>
    </interactant>
    <interactant intactId="EBI-746453">
        <id>P54725</id>
        <label>RAD23A</label>
    </interactant>
    <organismsDiffer>false</organismsDiffer>
    <experiments>3</experiments>
</comment>
<comment type="interaction">
    <interactant intactId="EBI-359276">
        <id>Q9Y4K3</id>
    </interactant>
    <interactant intactId="EBI-6257338">
        <id>Q9BVN2-2</id>
        <label>RUSC1</label>
    </interactant>
    <organismsDiffer>false</organismsDiffer>
    <experiments>2</experiments>
</comment>
<comment type="interaction">
    <interactant intactId="EBI-359276">
        <id>Q9Y4K3</id>
    </interactant>
    <interactant intactId="EBI-458391">
        <id>P04271</id>
        <label>S100B</label>
    </interactant>
    <organismsDiffer>false</organismsDiffer>
    <experiments>3</experiments>
</comment>
<comment type="interaction">
    <interactant intactId="EBI-359276">
        <id>Q9Y4K3</id>
    </interactant>
    <interactant intactId="EBI-985303">
        <id>Q9NYA1</id>
        <label>SPHK1</label>
    </interactant>
    <organismsDiffer>false</organismsDiffer>
    <experiments>2</experiments>
</comment>
<comment type="interaction">
    <interactant intactId="EBI-359276">
        <id>Q9Y4K3</id>
    </interactant>
    <interactant intactId="EBI-307104">
        <id>Q13501</id>
        <label>SQSTM1</label>
    </interactant>
    <organismsDiffer>false</organismsDiffer>
    <experiments>4</experiments>
</comment>
<comment type="interaction">
    <interactant intactId="EBI-359276">
        <id>Q9Y4K3</id>
    </interactant>
    <interactant intactId="EBI-25892332">
        <id>P43405-2</id>
        <label>SYK</label>
    </interactant>
    <organismsDiffer>false</organismsDiffer>
    <experiments>3</experiments>
</comment>
<comment type="interaction">
    <interactant intactId="EBI-359276">
        <id>Q9Y4K3</id>
    </interactant>
    <interactant intactId="EBI-358708">
        <id>Q9NYJ8</id>
        <label>TAB2</label>
    </interactant>
    <organismsDiffer>false</organismsDiffer>
    <experiments>3</experiments>
</comment>
<comment type="interaction">
    <interactant intactId="EBI-359276">
        <id>Q9Y4K3</id>
    </interactant>
    <interactant intactId="EBI-529518">
        <id>Q86VP1</id>
        <label>TAX1BP1</label>
    </interactant>
    <organismsDiffer>false</organismsDiffer>
    <experiments>8</experiments>
</comment>
<comment type="interaction">
    <interactant intactId="EBI-359276">
        <id>Q9Y4K3</id>
    </interactant>
    <interactant intactId="EBI-740711">
        <id>Q96CG3</id>
        <label>TIFA</label>
    </interactant>
    <organismsDiffer>false</organismsDiffer>
    <experiments>6</experiments>
</comment>
<comment type="interaction">
    <interactant intactId="EBI-359276">
        <id>Q9Y4K3</id>
    </interactant>
    <interactant intactId="EBI-1051794">
        <id>Q9UKE5</id>
        <label>TNIK</label>
    </interactant>
    <organismsDiffer>false</organismsDiffer>
    <experiments>3</experiments>
</comment>
<comment type="interaction">
    <interactant intactId="EBI-359276">
        <id>Q9Y4K3</id>
    </interactant>
    <interactant intactId="EBI-359224">
        <id>Q13077</id>
        <label>TRAF1</label>
    </interactant>
    <organismsDiffer>false</organismsDiffer>
    <experiments>20</experiments>
</comment>
<comment type="interaction">
    <interactant intactId="EBI-359276">
        <id>Q9Y4K3</id>
    </interactant>
    <interactant intactId="EBI-355744">
        <id>Q12933</id>
        <label>TRAF2</label>
    </interactant>
    <organismsDiffer>false</organismsDiffer>
    <experiments>10</experiments>
</comment>
<comment type="interaction">
    <interactant intactId="EBI-359276">
        <id>Q9Y4K3</id>
    </interactant>
    <interactant intactId="EBI-744798">
        <id>O43734</id>
        <label>TRAF3IP2</label>
    </interactant>
    <organismsDiffer>false</organismsDiffer>
    <experiments>4</experiments>
</comment>
<comment type="interaction">
    <interactant intactId="EBI-359276">
        <id>Q9Y4K3</id>
    </interactant>
    <interactant intactId="EBI-523498">
        <id>O00463</id>
        <label>TRAF5</label>
    </interactant>
    <organismsDiffer>false</organismsDiffer>
    <experiments>15</experiments>
</comment>
<comment type="interaction">
    <interactant intactId="EBI-359276">
        <id>Q9Y4K3</id>
    </interactant>
    <interactant intactId="EBI-359276">
        <id>Q9Y4K3</id>
        <label>TRAF6</label>
    </interactant>
    <organismsDiffer>false</organismsDiffer>
    <experiments>11</experiments>
</comment>
<comment type="interaction">
    <interactant intactId="EBI-359276">
        <id>Q9Y4K3</id>
    </interactant>
    <interactant intactId="EBI-3390054">
        <id>P0CG48</id>
        <label>UBC</label>
    </interactant>
    <organismsDiffer>false</organismsDiffer>
    <experiments>3</experiments>
</comment>
<comment type="interaction">
    <interactant intactId="EBI-359276">
        <id>Q9Y4K3</id>
    </interactant>
    <interactant intactId="EBI-743540">
        <id>P51668</id>
        <label>UBE2D1</label>
    </interactant>
    <organismsDiffer>false</organismsDiffer>
    <experiments>2</experiments>
</comment>
<comment type="interaction">
    <interactant intactId="EBI-359276">
        <id>Q9Y4K3</id>
    </interactant>
    <interactant intactId="EBI-347677">
        <id>P62837</id>
        <label>UBE2D2</label>
    </interactant>
    <organismsDiffer>false</organismsDiffer>
    <experiments>5</experiments>
</comment>
<comment type="interaction">
    <interactant intactId="EBI-359276">
        <id>Q9Y4K3</id>
    </interactant>
    <interactant intactId="EBI-348268">
        <id>P61077</id>
        <label>UBE2D3</label>
    </interactant>
    <organismsDiffer>false</organismsDiffer>
    <experiments>2</experiments>
</comment>
<comment type="interaction">
    <interactant intactId="EBI-359276">
        <id>Q9Y4K3</id>
    </interactant>
    <interactant intactId="EBI-1052908">
        <id>P61088</id>
        <label>UBE2N</label>
    </interactant>
    <organismsDiffer>false</organismsDiffer>
    <experiments>8</experiments>
</comment>
<comment type="interaction">
    <interactant intactId="EBI-359276">
        <id>Q9Y4K3</id>
    </interactant>
    <interactant intactId="EBI-745871">
        <id>Q9HAC8</id>
        <label>UBTD1</label>
    </interactant>
    <organismsDiffer>false</organismsDiffer>
    <experiments>3</experiments>
</comment>
<comment type="interaction">
    <interactant intactId="EBI-359276">
        <id>Q9Y4K3</id>
    </interactant>
    <interactant intactId="EBI-1993627">
        <id>O94888</id>
        <label>UBXN7</label>
    </interactant>
    <organismsDiffer>false</organismsDiffer>
    <experiments>3</experiments>
</comment>
<comment type="interaction">
    <interactant intactId="EBI-359276">
        <id>Q9Y4K3</id>
    </interactant>
    <interactant intactId="EBI-714860">
        <id>P09936</id>
        <label>UCHL1</label>
    </interactant>
    <organismsDiffer>false</organismsDiffer>
    <experiments>3</experiments>
</comment>
<comment type="interaction">
    <interactant intactId="EBI-359276">
        <id>Q9Y4K3</id>
    </interactant>
    <interactant intactId="EBI-908831">
        <id>O75385</id>
        <label>ULK1</label>
    </interactant>
    <organismsDiffer>false</organismsDiffer>
    <experiments>2</experiments>
</comment>
<comment type="interaction">
    <interactant intactId="EBI-359276">
        <id>Q9Y4K3</id>
    </interactant>
    <interactant intactId="EBI-743272">
        <id>O75604</id>
        <label>USP2</label>
    </interactant>
    <organismsDiffer>false</organismsDiffer>
    <experiments>3</experiments>
</comment>
<comment type="interaction">
    <interactant intactId="EBI-359276">
        <id>Q9Y4K3</id>
    </interactant>
    <interactant intactId="EBI-2799833">
        <id>Q8N1B4</id>
        <label>VPS52</label>
    </interactant>
    <organismsDiffer>false</organismsDiffer>
    <experiments>6</experiments>
</comment>
<comment type="interaction">
    <interactant intactId="EBI-359276">
        <id>Q9Y4K3</id>
    </interactant>
    <interactant intactId="EBI-540834">
        <id>P61964</id>
        <label>WDR5</label>
    </interactant>
    <organismsDiffer>false</organismsDiffer>
    <experiments>2</experiments>
</comment>
<comment type="interaction">
    <interactant intactId="EBI-359276">
        <id>Q9Y4K3</id>
    </interactant>
    <interactant intactId="EBI-515331">
        <id>P07947</id>
        <label>YES1</label>
    </interactant>
    <organismsDiffer>false</organismsDiffer>
    <experiments>6</experiments>
</comment>
<comment type="interaction">
    <interactant intactId="EBI-359276">
        <id>Q9Y4K3</id>
    </interactant>
    <interactant intactId="EBI-2510804">
        <id>Q5VVQ6</id>
        <label>YOD1</label>
    </interactant>
    <organismsDiffer>false</organismsDiffer>
    <experiments>5</experiments>
</comment>
<comment type="interaction">
    <interactant intactId="EBI-359276">
        <id>Q9Y4K3</id>
    </interactant>
    <interactant intactId="EBI-739899">
        <id>P24278</id>
        <label>ZBTB25</label>
    </interactant>
    <organismsDiffer>false</organismsDiffer>
    <experiments>3</experiments>
</comment>
<comment type="interaction">
    <interactant intactId="EBI-359276">
        <id>Q9Y4K3</id>
    </interactant>
    <interactant intactId="EBI-528190">
        <id>Q8TD23</id>
        <label>ZNF675</label>
    </interactant>
    <organismsDiffer>false</organismsDiffer>
    <experiments>4</experiments>
</comment>
<comment type="interaction">
    <interactant intactId="EBI-359276">
        <id>Q9Y4K3</id>
    </interactant>
    <interactant intactId="EBI-527853">
        <id>Q9UGI0</id>
        <label>ZRANB1</label>
    </interactant>
    <organismsDiffer>false</organismsDiffer>
    <experiments>4</experiments>
</comment>
<comment type="interaction">
    <interactant intactId="EBI-359276">
        <id>Q9Y4K3</id>
    </interactant>
    <interactant intactId="EBI-527020">
        <id>Q9QZH6</id>
        <label>Ecsit</label>
    </interactant>
    <organismsDiffer>true</organismsDiffer>
    <experiments>2</experiments>
</comment>
<comment type="interaction">
    <interactant intactId="EBI-359276">
        <id>Q9Y4K3</id>
    </interactant>
    <interactant intactId="EBI-1038810">
        <id>P07174</id>
        <label>Ngfr</label>
    </interactant>
    <organismsDiffer>true</organismsDiffer>
    <experiments>2</experiments>
</comment>
<comment type="interaction">
    <interactant intactId="EBI-359276">
        <id>Q9Y4K3</id>
    </interactant>
    <interactant intactId="EBI-6880600">
        <id>P10221</id>
        <label>UL37</label>
    </interactant>
    <organismsDiffer>true</organismsDiffer>
    <experiments>3</experiments>
</comment>
<comment type="interaction">
    <interactant intactId="EBI-359276">
        <id>Q9Y4K3</id>
    </interactant>
    <interactant intactId="EBI-3863691">
        <id>Q01220</id>
        <label>VACWR178</label>
    </interactant>
    <organismsDiffer>true</organismsDiffer>
    <experiments>2</experiments>
</comment>
<comment type="interaction">
    <interactant intactId="EBI-359276">
        <id>Q9Y4K3</id>
    </interactant>
    <interactant intactId="EBI-8622036">
        <id>Q8V2D1</id>
    </interactant>
    <organismsDiffer>true</organismsDiffer>
    <experiments>3</experiments>
</comment>
<comment type="subcellular location">
    <subcellularLocation>
        <location evidence="14 22 25">Cytoplasm</location>
    </subcellularLocation>
    <subcellularLocation>
        <location evidence="14">Cytoplasm</location>
        <location evidence="14">Cell cortex</location>
    </subcellularLocation>
    <subcellularLocation>
        <location evidence="14">Nucleus</location>
    </subcellularLocation>
    <subcellularLocation>
        <location evidence="2">Lipid droplet</location>
    </subcellularLocation>
    <text evidence="1">Found in the nuclei of some aggressive B-cell lymphoma cell lines as well as in the nuclei of both resting and activated T- and B-lymphocytes. Found in punctate nuclear body protein complexes. Ubiquitination may occur in the cytoplasm and sumoylation in the nucleus. RSAD2/viperin recruits it to the lipid droplet (By similarity).</text>
</comment>
<comment type="tissue specificity">
    <text>Expressed in heart, brain, placenta, lung, liver, skeletal muscle, kidney and pancreas.</text>
</comment>
<comment type="domain">
    <text>The coiled coil domain mediates homo- and hetero-oligomerization.</text>
</comment>
<comment type="domain">
    <text>The MATH/TRAF domain binds to receptor cytoplasmic domains.</text>
</comment>
<comment type="PTM">
    <text evidence="14">Sumoylated on Lys-124, Lys-142 and Lys-453 with SUMO1.</text>
</comment>
<comment type="PTM">
    <text evidence="2 9 12 14 16 17 18 20 26 28">Polyubiquitinated on Lys-124 by TRAF3IP2; after cell stimulation with IL17A (PubMed:19825828). Polyubiquitinated on Lys-124; after cell stimulation with IL1B or TGFB. This ligand-induced cell stimulation leads to dimerization/oligomerization of TRAF6 molecules, followed by auto-ubiquitination which involves UBE2N and UBE2V1 and leads to TRAF6 activation. This 'Lys-63' site-specific poly-ubiquitination appears to be associated with the activation of signaling molecules. Endogenous autoubiquitination occurs only for the cytoplasmic form. Deubiquitinated by USP10 in a TANK-dependent manner, leading to the negative regulation of NF-kappaB signaling upon DNA damage (PubMed:25861989). LRRC19 induces 'Lys-63' ubiquitination (PubMed:25026888). Ubiquitinated at Lys-319 by the SCF(FBXL2) complex, leading to its degradation by the proteasome (By similarity).</text>
</comment>
<comment type="PTM">
    <text evidence="25">(Microbial infection) Deubiquitinated by Epstein-Barr virus BPLF1 on both 'Lys-48' and 'Lys-63'-linked ubiquitin chains; leading to NF-kappa-B signaling inhibition.</text>
</comment>
<comment type="similarity">
    <text evidence="34">Belongs to the TNF receptor-associated factor family. A subfamily.</text>
</comment>
<reference key="1">
    <citation type="journal article" date="1996" name="Nature">
        <title>TRAF6 is a signal transducer for interleukin-1.</title>
        <authorList>
            <person name="Cao Z."/>
            <person name="Xiong J."/>
            <person name="Takeuchi M."/>
            <person name="Kurama T."/>
            <person name="Goeddel D.V."/>
        </authorList>
    </citation>
    <scope>NUCLEOTIDE SEQUENCE [MRNA]</scope>
    <scope>FUNCTION</scope>
    <scope>INTERACTION WITH IRAK1</scope>
</reference>
<reference key="2">
    <citation type="submission" date="2003-01" db="EMBL/GenBank/DDBJ databases">
        <authorList>
            <consortium name="SeattleSNPs variation discovery resource"/>
        </authorList>
    </citation>
    <scope>NUCLEOTIDE SEQUENCE [GENOMIC DNA]</scope>
</reference>
<reference key="3">
    <citation type="journal article" date="2004" name="Nat. Genet.">
        <title>Complete sequencing and characterization of 21,243 full-length human cDNAs.</title>
        <authorList>
            <person name="Ota T."/>
            <person name="Suzuki Y."/>
            <person name="Nishikawa T."/>
            <person name="Otsuki T."/>
            <person name="Sugiyama T."/>
            <person name="Irie R."/>
            <person name="Wakamatsu A."/>
            <person name="Hayashi K."/>
            <person name="Sato H."/>
            <person name="Nagai K."/>
            <person name="Kimura K."/>
            <person name="Makita H."/>
            <person name="Sekine M."/>
            <person name="Obayashi M."/>
            <person name="Nishi T."/>
            <person name="Shibahara T."/>
            <person name="Tanaka T."/>
            <person name="Ishii S."/>
            <person name="Yamamoto J."/>
            <person name="Saito K."/>
            <person name="Kawai Y."/>
            <person name="Isono Y."/>
            <person name="Nakamura Y."/>
            <person name="Nagahari K."/>
            <person name="Murakami K."/>
            <person name="Yasuda T."/>
            <person name="Iwayanagi T."/>
            <person name="Wagatsuma M."/>
            <person name="Shiratori A."/>
            <person name="Sudo H."/>
            <person name="Hosoiri T."/>
            <person name="Kaku Y."/>
            <person name="Kodaira H."/>
            <person name="Kondo H."/>
            <person name="Sugawara M."/>
            <person name="Takahashi M."/>
            <person name="Kanda K."/>
            <person name="Yokoi T."/>
            <person name="Furuya T."/>
            <person name="Kikkawa E."/>
            <person name="Omura Y."/>
            <person name="Abe K."/>
            <person name="Kamihara K."/>
            <person name="Katsuta N."/>
            <person name="Sato K."/>
            <person name="Tanikawa M."/>
            <person name="Yamazaki M."/>
            <person name="Ninomiya K."/>
            <person name="Ishibashi T."/>
            <person name="Yamashita H."/>
            <person name="Murakawa K."/>
            <person name="Fujimori K."/>
            <person name="Tanai H."/>
            <person name="Kimata M."/>
            <person name="Watanabe M."/>
            <person name="Hiraoka S."/>
            <person name="Chiba Y."/>
            <person name="Ishida S."/>
            <person name="Ono Y."/>
            <person name="Takiguchi S."/>
            <person name="Watanabe S."/>
            <person name="Yosida M."/>
            <person name="Hotuta T."/>
            <person name="Kusano J."/>
            <person name="Kanehori K."/>
            <person name="Takahashi-Fujii A."/>
            <person name="Hara H."/>
            <person name="Tanase T.-O."/>
            <person name="Nomura Y."/>
            <person name="Togiya S."/>
            <person name="Komai F."/>
            <person name="Hara R."/>
            <person name="Takeuchi K."/>
            <person name="Arita M."/>
            <person name="Imose N."/>
            <person name="Musashino K."/>
            <person name="Yuuki H."/>
            <person name="Oshima A."/>
            <person name="Sasaki N."/>
            <person name="Aotsuka S."/>
            <person name="Yoshikawa Y."/>
            <person name="Matsunawa H."/>
            <person name="Ichihara T."/>
            <person name="Shiohata N."/>
            <person name="Sano S."/>
            <person name="Moriya S."/>
            <person name="Momiyama H."/>
            <person name="Satoh N."/>
            <person name="Takami S."/>
            <person name="Terashima Y."/>
            <person name="Suzuki O."/>
            <person name="Nakagawa S."/>
            <person name="Senoh A."/>
            <person name="Mizoguchi H."/>
            <person name="Goto Y."/>
            <person name="Shimizu F."/>
            <person name="Wakebe H."/>
            <person name="Hishigaki H."/>
            <person name="Watanabe T."/>
            <person name="Sugiyama A."/>
            <person name="Takemoto M."/>
            <person name="Kawakami B."/>
            <person name="Yamazaki M."/>
            <person name="Watanabe K."/>
            <person name="Kumagai A."/>
            <person name="Itakura S."/>
            <person name="Fukuzumi Y."/>
            <person name="Fujimori Y."/>
            <person name="Komiyama M."/>
            <person name="Tashiro H."/>
            <person name="Tanigami A."/>
            <person name="Fujiwara T."/>
            <person name="Ono T."/>
            <person name="Yamada K."/>
            <person name="Fujii Y."/>
            <person name="Ozaki K."/>
            <person name="Hirao M."/>
            <person name="Ohmori Y."/>
            <person name="Kawabata A."/>
            <person name="Hikiji T."/>
            <person name="Kobatake N."/>
            <person name="Inagaki H."/>
            <person name="Ikema Y."/>
            <person name="Okamoto S."/>
            <person name="Okitani R."/>
            <person name="Kawakami T."/>
            <person name="Noguchi S."/>
            <person name="Itoh T."/>
            <person name="Shigeta K."/>
            <person name="Senba T."/>
            <person name="Matsumura K."/>
            <person name="Nakajima Y."/>
            <person name="Mizuno T."/>
            <person name="Morinaga M."/>
            <person name="Sasaki M."/>
            <person name="Togashi T."/>
            <person name="Oyama M."/>
            <person name="Hata H."/>
            <person name="Watanabe M."/>
            <person name="Komatsu T."/>
            <person name="Mizushima-Sugano J."/>
            <person name="Satoh T."/>
            <person name="Shirai Y."/>
            <person name="Takahashi Y."/>
            <person name="Nakagawa K."/>
            <person name="Okumura K."/>
            <person name="Nagase T."/>
            <person name="Nomura N."/>
            <person name="Kikuchi H."/>
            <person name="Masuho Y."/>
            <person name="Yamashita R."/>
            <person name="Nakai K."/>
            <person name="Yada T."/>
            <person name="Nakamura Y."/>
            <person name="Ohara O."/>
            <person name="Isogai T."/>
            <person name="Sugano S."/>
        </authorList>
    </citation>
    <scope>NUCLEOTIDE SEQUENCE [LARGE SCALE MRNA]</scope>
    <source>
        <tissue>Trachea</tissue>
    </source>
</reference>
<reference key="4">
    <citation type="journal article" date="2006" name="Nature">
        <title>Human chromosome 11 DNA sequence and analysis including novel gene identification.</title>
        <authorList>
            <person name="Taylor T.D."/>
            <person name="Noguchi H."/>
            <person name="Totoki Y."/>
            <person name="Toyoda A."/>
            <person name="Kuroki Y."/>
            <person name="Dewar K."/>
            <person name="Lloyd C."/>
            <person name="Itoh T."/>
            <person name="Takeda T."/>
            <person name="Kim D.-W."/>
            <person name="She X."/>
            <person name="Barlow K.F."/>
            <person name="Bloom T."/>
            <person name="Bruford E."/>
            <person name="Chang J.L."/>
            <person name="Cuomo C.A."/>
            <person name="Eichler E."/>
            <person name="FitzGerald M.G."/>
            <person name="Jaffe D.B."/>
            <person name="LaButti K."/>
            <person name="Nicol R."/>
            <person name="Park H.-S."/>
            <person name="Seaman C."/>
            <person name="Sougnez C."/>
            <person name="Yang X."/>
            <person name="Zimmer A.R."/>
            <person name="Zody M.C."/>
            <person name="Birren B.W."/>
            <person name="Nusbaum C."/>
            <person name="Fujiyama A."/>
            <person name="Hattori M."/>
            <person name="Rogers J."/>
            <person name="Lander E.S."/>
            <person name="Sakaki Y."/>
        </authorList>
    </citation>
    <scope>NUCLEOTIDE SEQUENCE [LARGE SCALE GENOMIC DNA]</scope>
</reference>
<reference key="5">
    <citation type="submission" date="2005-09" db="EMBL/GenBank/DDBJ databases">
        <authorList>
            <person name="Mural R.J."/>
            <person name="Istrail S."/>
            <person name="Sutton G.G."/>
            <person name="Florea L."/>
            <person name="Halpern A.L."/>
            <person name="Mobarry C.M."/>
            <person name="Lippert R."/>
            <person name="Walenz B."/>
            <person name="Shatkay H."/>
            <person name="Dew I."/>
            <person name="Miller J.R."/>
            <person name="Flanigan M.J."/>
            <person name="Edwards N.J."/>
            <person name="Bolanos R."/>
            <person name="Fasulo D."/>
            <person name="Halldorsson B.V."/>
            <person name="Hannenhalli S."/>
            <person name="Turner R."/>
            <person name="Yooseph S."/>
            <person name="Lu F."/>
            <person name="Nusskern D.R."/>
            <person name="Shue B.C."/>
            <person name="Zheng X.H."/>
            <person name="Zhong F."/>
            <person name="Delcher A.L."/>
            <person name="Huson D.H."/>
            <person name="Kravitz S.A."/>
            <person name="Mouchard L."/>
            <person name="Reinert K."/>
            <person name="Remington K.A."/>
            <person name="Clark A.G."/>
            <person name="Waterman M.S."/>
            <person name="Eichler E.E."/>
            <person name="Adams M.D."/>
            <person name="Hunkapiller M.W."/>
            <person name="Myers E.W."/>
            <person name="Venter J.C."/>
        </authorList>
    </citation>
    <scope>NUCLEOTIDE SEQUENCE [LARGE SCALE GENOMIC DNA]</scope>
</reference>
<reference key="6">
    <citation type="journal article" date="2004" name="Genome Res.">
        <title>The status, quality, and expansion of the NIH full-length cDNA project: the Mammalian Gene Collection (MGC).</title>
        <authorList>
            <consortium name="The MGC Project Team"/>
        </authorList>
    </citation>
    <scope>NUCLEOTIDE SEQUENCE [LARGE SCALE MRNA]</scope>
    <source>
        <tissue>Testis</tissue>
    </source>
</reference>
<reference key="7">
    <citation type="journal article" date="1997" name="Nature">
        <title>MAP3K-related kinase involved in NF-kappaB induction by TNF, CD95 and IL-1.</title>
        <authorList>
            <person name="Malinin N.L."/>
            <person name="Boldin M.P."/>
            <person name="Kovalenko A.V."/>
            <person name="Wallach D."/>
        </authorList>
    </citation>
    <scope>INTERACTION WITH MAP3K14</scope>
</reference>
<reference key="8">
    <citation type="journal article" date="1997" name="Science">
        <title>IRAK (Pelle) family member IRAK-2 and MyD88 as proximal mediators of IL-1 signaling.</title>
        <authorList>
            <person name="Muzio M."/>
            <person name="Ni J."/>
            <person name="Feng P."/>
            <person name="Dixit V.M."/>
        </authorList>
    </citation>
    <scope>INTERACTION WITH IRAK2</scope>
</reference>
<reference key="9">
    <citation type="journal article" date="1998" name="J. Biol. Chem.">
        <title>RIP2 is a novel NF-kappaB-activating and cell death-inducing kinase.</title>
        <authorList>
            <person name="McCarthy J.V."/>
            <person name="Ni J."/>
            <person name="Dixit V.M."/>
        </authorList>
    </citation>
    <scope>INTERACTION WITH RIPK2</scope>
</reference>
<reference key="10">
    <citation type="journal article" date="1998" name="J. Biol. Chem.">
        <title>The TRAF family of signal transducers mediates NF-kappaB activation by the TRANCE receptor.</title>
        <authorList>
            <person name="Wong B.R."/>
            <person name="Josien R."/>
            <person name="Lee S.Y."/>
            <person name="Vologodskaia M."/>
            <person name="Steinman R.M."/>
            <person name="Choi Y."/>
        </authorList>
    </citation>
    <scope>INTERACTION WITH TNFRSF11A</scope>
</reference>
<reference key="11">
    <citation type="journal article" date="1998" name="J. Exp. Med.">
        <title>Tumor necrosis factor receptor-associated factor 6 (TRAF6) stimulates extracellular signal-regulated kinase (ERK) activity in CD40 signaling along a ras-independent pathway.</title>
        <authorList>
            <person name="Kashiwada M."/>
            <person name="Shirakata Y."/>
            <person name="Inoue J."/>
            <person name="Nakano H."/>
            <person name="Okazaki K."/>
            <person name="Okumura K."/>
            <person name="Yamamoto T."/>
            <person name="Nagaoka H."/>
            <person name="Takemori T."/>
        </authorList>
    </citation>
    <scope>INTERACTION WITH TNFRSF5</scope>
</reference>
<reference key="12">
    <citation type="journal article" date="1998" name="Mol. Cell">
        <title>ASK1 is essential for JNK/SAPK activation by TRAF2.</title>
        <authorList>
            <person name="Nishitoh H."/>
            <person name="Saitoh M."/>
            <person name="Mochida Y."/>
            <person name="Takeda K."/>
            <person name="Nakano H."/>
            <person name="Rothe M."/>
            <person name="Miyazono K."/>
            <person name="Ichijo H."/>
        </authorList>
    </citation>
    <scope>INTERACTION WITH MAP3K5</scope>
</reference>
<reference key="13">
    <citation type="journal article" date="1999" name="Genes Dev.">
        <title>Signaling by proinflammatory cytokines: oligomerization of TRAF2 and TRAF6 is sufficient for JNK and IKK activation and target gene induction via an amino-terminal effector domain.</title>
        <authorList>
            <person name="Baud V."/>
            <person name="Liu Z.-G."/>
            <person name="Bennett B."/>
            <person name="Suzuki N."/>
            <person name="Xia Y."/>
            <person name="Karin M."/>
        </authorList>
    </citation>
    <scope>INTERACTION WITH MAP3K1</scope>
</reference>
<reference key="14">
    <citation type="journal article" date="1999" name="J. Biol. Chem.">
        <title>Association of the p75 neurotrophin receptor with TRAF6.</title>
        <authorList>
            <person name="Khursigara G."/>
            <person name="Orlinick J.R."/>
            <person name="Chao M.V."/>
        </authorList>
    </citation>
    <scope>INTERACTION WITH NGFR</scope>
</reference>
<reference key="15">
    <citation type="journal article" date="1999" name="J. Biol. Chem.">
        <title>IRAK-M is a novel member of the Pelle/interleukin-1 receptor-associated kinase (IRAK) family.</title>
        <authorList>
            <person name="Wesche H."/>
            <person name="Gao X."/>
            <person name="Li X."/>
            <person name="Kirschning C.J."/>
            <person name="Stark G.R."/>
            <person name="Cao Z."/>
        </authorList>
    </citation>
    <scope>INTERACTION WITH IRAK3</scope>
</reference>
<reference key="16">
    <citation type="journal article" date="1999" name="J. Biol. Chem.">
        <title>TRAF family proteins interact with the common neurotrophin receptor and modulate apoptosis induction.</title>
        <authorList>
            <person name="Ye X."/>
            <person name="Mehlen P."/>
            <person name="Rabizadeh S."/>
            <person name="VanArsdale T."/>
            <person name="Zhang H."/>
            <person name="Shin H."/>
            <person name="Wang J.J.L."/>
            <person name="Leo E."/>
            <person name="Zapata J.M."/>
            <person name="Hauser C.A."/>
            <person name="Reed J.C."/>
            <person name="Bredesen D.E."/>
        </authorList>
    </citation>
    <scope>INTERACTION WITH NGFR</scope>
</reference>
<reference key="17">
    <citation type="journal article" date="1999" name="Mol. Cell">
        <title>TRANCE, a TNF family member, activates Akt/PKB through a signaling complex involving TRAF6 and c-Src.</title>
        <authorList>
            <person name="Wong B.R."/>
            <person name="Besser D."/>
            <person name="Kim N."/>
            <person name="Arron J.R."/>
            <person name="Vologodskaia M."/>
            <person name="Hanafusa H."/>
            <person name="Choi Y."/>
        </authorList>
    </citation>
    <scope>INTERACTION WITH TNFRSF11A AND CSK</scope>
</reference>
<reference key="18">
    <citation type="journal article" date="1999" name="Nature">
        <title>The kinase TAK1 can activate the NIK-I kappaB as well as the MAP kinase cascade in the IL-1 signalling pathway.</title>
        <authorList>
            <person name="Ninomiya-Tsuji J."/>
            <person name="Kishimoto K."/>
            <person name="Hiyama A."/>
            <person name="Inoue J."/>
            <person name="Cao Z."/>
            <person name="Matsumoto K."/>
        </authorList>
    </citation>
    <scope>INTERACTION WITH MAP3K7 AND TAB1</scope>
</reference>
<reference key="19">
    <citation type="journal article" date="1999" name="Oncogene">
        <title>Mediation of TNF receptor-associated factor effector functions by apoptosis signal-regulating kinase-1 (ASK1).</title>
        <authorList>
            <person name="Hoeflich K.P."/>
            <person name="Yeh W.C."/>
            <person name="Yao Z."/>
            <person name="Mak T.W."/>
            <person name="Woodgett J.R."/>
        </authorList>
    </citation>
    <scope>INTERACTION WITH MAP3K5</scope>
</reference>
<reference key="20">
    <citation type="journal article" date="2000" name="Cell">
        <title>Activation of the IkappaB kinase complex by TRAF6 requires a dimeric ubiquitin-conjugating enzyme complex and a unique polyubiquitin chain.</title>
        <authorList>
            <person name="Deng L."/>
            <person name="Wang C."/>
            <person name="Spencer E."/>
            <person name="Yang L."/>
            <person name="Braun A."/>
            <person name="You J."/>
            <person name="Slaughter C."/>
            <person name="Pickart C."/>
            <person name="Chen Z.J."/>
        </authorList>
    </citation>
    <scope>INTERACTION WITH UBE2V1</scope>
    <scope>FUNCTION AS AN E3 UBIQUITIN LIGASE</scope>
</reference>
<reference key="21">
    <citation type="journal article" date="2000" name="J. Biol. Chem.">
        <title>TTRAP, a novel protein that associates with CD40, tumor necrosis factor (TNF) receptor-75 and TNF receptor-associated factors (TRAFs), and that inhibits nuclear factor-kappa B activation.</title>
        <authorList>
            <person name="Pype S."/>
            <person name="Declercq W."/>
            <person name="Ibrahimi A."/>
            <person name="Michiels C."/>
            <person name="Van Rietschoten J.G.I."/>
            <person name="Dewulf N."/>
            <person name="de Boer M."/>
            <person name="Vandenabeele P."/>
            <person name="Huylebroeck D."/>
            <person name="Remacle J.E."/>
        </authorList>
    </citation>
    <scope>INTERACTION WITH TDP2</scope>
</reference>
<reference key="22">
    <citation type="journal article" date="2000" name="Proc. Natl. Acad. Sci. U.S.A.">
        <title>B cell maturation protein is a receptor for the tumor necrosis factor family member TALL-1.</title>
        <authorList>
            <person name="Shu H.-B."/>
            <person name="Johnson H."/>
        </authorList>
    </citation>
    <scope>INTERACTION WITH TNFRSF17</scope>
</reference>
<reference key="23">
    <citation type="journal article" date="2000" name="Proc. Natl. Acad. Sci. U.S.A.">
        <title>T6BP, a TRAF6-interacting protein involved in IL-1 signaling.</title>
        <authorList>
            <person name="Ling L."/>
            <person name="Goeddel D.V."/>
        </authorList>
    </citation>
    <scope>INTERACTION WITH TAX1BP1</scope>
</reference>
<reference key="24">
    <citation type="journal article" date="2001" name="Nature">
        <title>TAK1 is a ubiquitin-dependent kinase of MKK and IKK.</title>
        <authorList>
            <person name="Wang C."/>
            <person name="Deng L."/>
            <person name="Hong M."/>
            <person name="Akkaraju G.R."/>
            <person name="Inoue J."/>
            <person name="Chen Z.J."/>
        </authorList>
    </citation>
    <scope>UBIQUITINATION</scope>
</reference>
<reference key="25">
    <citation type="journal article" date="2002" name="FEBS Lett.">
        <title>NF-kappaB activator Act1 associates with IL-1/Toll pathway adapter molecule TRAF6.</title>
        <authorList>
            <person name="Kanamori M."/>
            <person name="Kai C."/>
            <person name="Hayashizaki Y."/>
            <person name="Suzuki H."/>
        </authorList>
    </citation>
    <scope>INTERACTION WITH TRAF3IP2</scope>
</reference>
<reference key="26">
    <citation type="journal article" date="2002" name="J. Biol. Chem.">
        <title>A novel zinc finger protein that inhibits osteoclastogenesis and the function of tumor necrosis factor receptor-associated factor 6.</title>
        <authorList>
            <person name="Shin J.N."/>
            <person name="Kim I."/>
            <person name="Lee J.S."/>
            <person name="Koh G.Y."/>
            <person name="Lee Z.H."/>
            <person name="Kim H.-H."/>
        </authorList>
    </citation>
    <scope>INTERACTION WITH ZNF675</scope>
</reference>
<reference key="27">
    <citation type="journal article" date="2002" name="Proc. Natl. Acad. Sci. U.S.A.">
        <title>IRAK4: a novel member of the IRAK family with the properties of an IRAK-kinase.</title>
        <authorList>
            <person name="Li S."/>
            <person name="Strelow A."/>
            <person name="Fontana E.J."/>
            <person name="Wesche H."/>
        </authorList>
    </citation>
    <scope>INTERACTION WITH IRAK4</scope>
</reference>
<reference key="28">
    <citation type="journal article" date="2003" name="J. Biol. Chem.">
        <title>Pellino 1 is required for interleukin-1 (IL-1)-mediated signaling through its interaction with the IL-1 receptor-associated kinase 4 (IRAK4)-IRAK-tumor necrosis factor receptor-associated factor 6 (TRAF6) complex.</title>
        <authorList>
            <person name="Jiang Z."/>
            <person name="Johnson H.J."/>
            <person name="Nie H."/>
            <person name="Qin J."/>
            <person name="Bird T.A."/>
            <person name="Li X."/>
        </authorList>
    </citation>
    <scope>INTERACTION WITH PELI1</scope>
</reference>
<reference key="29">
    <citation type="journal article" date="2003" name="FEBS Lett.">
        <title>Pellino2 activates the mitogen activated protein kinase pathway.</title>
        <authorList>
            <person name="Jensen L.E."/>
            <person name="Whitehead A.S."/>
        </authorList>
    </citation>
    <scope>INTERACTION WITH PELI1 AND PELI2</scope>
</reference>
<reference key="30">
    <citation type="journal article" date="2003" name="J. Biol. Chem.">
        <title>TIRP, a novel Toll/interleukin-1 receptor (TIR) domain-containing adapter protein involved in TIR signaling.</title>
        <authorList>
            <person name="Bin L.-H."/>
            <person name="Xu L.-G."/>
            <person name="Shu H.-B."/>
        </authorList>
    </citation>
    <scope>INTERACTION WITH TICAM2</scope>
</reference>
<reference key="31">
    <citation type="journal article" date="2003" name="J. Immunol.">
        <title>Pellino3, a novel member of the Pellino protein family, promotes activation of c-Jun and Elk-1 and may act as a scaffolding protein.</title>
        <authorList>
            <person name="Jensen L.E."/>
            <person name="Whitehead A.S."/>
        </authorList>
    </citation>
    <scope>INTERACTION WITH PELI3</scope>
</reference>
<reference key="32">
    <citation type="journal article" date="2003" name="J. Immunol.">
        <title>Toll/IL-1 receptor domain-containing adapter inducing IFN-beta (TRIF) associates with TNF receptor-associated factor 6 and TANK-binding kinase 1, and activates two distinct transcription factors, NF-kappa B and IFN-regulatory factor-3, in the Toll-like receptor signaling.</title>
        <authorList>
            <person name="Sato S."/>
            <person name="Sugiyama M."/>
            <person name="Yamamoto M."/>
            <person name="Watanabe Y."/>
            <person name="Kawai T."/>
            <person name="Takeda K."/>
            <person name="Akira S."/>
        </authorList>
    </citation>
    <scope>INTERACTION WITH TICAM1</scope>
</reference>
<reference key="33">
    <citation type="journal article" date="2004" name="J. Biol. Chem.">
        <title>Mechanisms of the TRIF-induced interferon-stimulated response element and NF-kappaB activation and apoptosis pathways.</title>
        <authorList>
            <person name="Han K.J."/>
            <person name="Su X."/>
            <person name="Xu L.-G."/>
            <person name="Bin L.H."/>
            <person name="Zhang J."/>
            <person name="Shu H.-B."/>
        </authorList>
    </citation>
    <scope>INTERACTION WITH TICAM1</scope>
</reference>
<reference key="34">
    <citation type="journal article" date="2004" name="J. Biol. Chem.">
        <title>ZNF216 is an A20-like and IkappaB kinase gamma-interacting inhibitor of NFkappaB activation.</title>
        <authorList>
            <person name="Huang J."/>
            <person name="Teng L."/>
            <person name="Li L."/>
            <person name="Liu T."/>
            <person name="Li L."/>
            <person name="Chen D."/>
            <person name="Xu L.-G."/>
            <person name="Zhai Z."/>
            <person name="Shu H.-B."/>
        </authorList>
    </citation>
    <scope>INTERACTION WITH ZFAND5</scope>
</reference>
<reference key="35">
    <citation type="journal article" date="2004" name="Mol. Cell. Biol.">
        <title>TRAF family proteins link PKR with NF-kappa B activation.</title>
        <authorList>
            <person name="Gil J."/>
            <person name="Garcia M.A."/>
            <person name="Gomez-Puertas P."/>
            <person name="Guerra S."/>
            <person name="Rullas J."/>
            <person name="Nakano H."/>
            <person name="Alcami J."/>
            <person name="Esteban M."/>
        </authorList>
    </citation>
    <scope>INTERACTION WITH EIF2AK2</scope>
</reference>
<reference key="36">
    <citation type="journal article" date="2004" name="Proc. Natl. Acad. Sci. U.S.A.">
        <title>Toll-like receptor 3-mediated activation of NF-kappaB and IRF3 diverges at Toll-IL-1 receptor domain-containing adapter inducing IFN-beta.</title>
        <authorList>
            <person name="Jiang Z."/>
            <person name="Mak T.W."/>
            <person name="Sen G."/>
            <person name="Li X."/>
        </authorList>
    </citation>
    <scope>INTERACTION WITH TICAM1</scope>
</reference>
<reference key="37">
    <citation type="journal article" date="2005" name="Cell">
        <title>Identification and characterization of MAVS, a mitochondrial antiviral signaling protein that activates NF-kappaB and IRF 3.</title>
        <authorList>
            <person name="Seth R.B."/>
            <person name="Sun L."/>
            <person name="Ea C.-K."/>
            <person name="Chen Z.J."/>
        </authorList>
    </citation>
    <scope>INTERACTION WITH MAVS</scope>
</reference>
<reference key="38">
    <citation type="journal article" date="2005" name="Immunity">
        <title>IL-33, an interleukin-1-like cytokine that signals via the IL-1 receptor-related protein ST 2 and induces T helper type 2-associated cytokines.</title>
        <authorList>
            <person name="Schmitz J."/>
            <person name="Owyang A."/>
            <person name="Oldham E."/>
            <person name="Song Y."/>
            <person name="Murphy E."/>
            <person name="McClanahan T.K."/>
            <person name="Zurawski G."/>
            <person name="Moshrefi M."/>
            <person name="Qin J."/>
            <person name="Li X."/>
            <person name="Gorman D.M."/>
            <person name="Bazan J.F."/>
            <person name="Kastelein R.A."/>
        </authorList>
    </citation>
    <scope>INTERACTION WITH IL1RL1</scope>
</reference>
<reference key="39">
    <citation type="journal article" date="2005" name="J. Biol. Chem.">
        <title>FLN29, a novel interferon- and LPS-inducible gene acting as a negative regulator of toll-like receptor signaling.</title>
        <authorList>
            <person name="Mashima R."/>
            <person name="Saeki K."/>
            <person name="Aki D."/>
            <person name="Minoda Y."/>
            <person name="Takaki H."/>
            <person name="Sanada T."/>
            <person name="Kobayashi T."/>
            <person name="Aburatani H."/>
            <person name="Yamanashi Y."/>
            <person name="Yoshimura A."/>
        </authorList>
    </citation>
    <scope>INTERACTION WITH TRAFD1</scope>
</reference>
<reference key="40">
    <citation type="journal article" date="2005" name="Mol. Cell">
        <title>VISA is an adapter protein required for virus-triggered IFN-beta Signaling.</title>
        <authorList>
            <person name="Xu L.-G."/>
            <person name="Wang Y.-Y."/>
            <person name="Han K.-J."/>
            <person name="Li L.-Y."/>
            <person name="Zhai Z."/>
            <person name="Shu H.-B."/>
        </authorList>
    </citation>
    <scope>INTERACTION WITH MAVS</scope>
</reference>
<reference key="41">
    <citation type="journal article" date="2005" name="Mol. Cell. Biol.">
        <title>The LIM protein Ajuba influences interleukin-1-induced NF-kappaB activation by affecting the assembly and activity of the protein kinase Czeta/p62/TRAF6 signaling complex.</title>
        <authorList>
            <person name="Feng Y."/>
            <person name="Longmore G.D."/>
        </authorList>
    </citation>
    <scope>INTERACTION WITH AJUBA</scope>
</reference>
<reference key="42">
    <citation type="journal article" date="2006" name="Nat. Immunol.">
        <title>Association of beta-arrestin and TRAF6 negatively regulates Toll-like receptor-interleukin 1 receptor signaling.</title>
        <authorList>
            <person name="Wang Y."/>
            <person name="Tang Y."/>
            <person name="Teng L."/>
            <person name="Wu Y."/>
            <person name="Zhao X."/>
            <person name="Pei G."/>
        </authorList>
    </citation>
    <scope>FUNCTION IN TRANSCRIPTIONAL ACTIVATION OF NF-KAPPA-B AND JUN</scope>
    <scope>INTERACTION WITH ARRB1 AND ARRB2</scope>
</reference>
<reference key="43">
    <citation type="journal article" date="2006" name="Nat. Immunol.">
        <title>Smad6 negatively regulates interleukin 1-receptor-Toll-like receptor signaling through direct interaction with the adapter Pellino-1.</title>
        <authorList>
            <person name="Choi K.C."/>
            <person name="Lee Y.S."/>
            <person name="Lim S."/>
            <person name="Choi H.K."/>
            <person name="Lee C.H."/>
            <person name="Lee E.K."/>
            <person name="Hong S."/>
            <person name="Kim I.H."/>
            <person name="Kim S.J."/>
            <person name="Park S.H."/>
        </authorList>
    </citation>
    <scope>IDENTIFICATION IN COMPLEX WITH IRAK1; IRAK4; MYD88 AND PELI1</scope>
</reference>
<reference key="44">
    <citation type="journal article" date="2007" name="J. Biol. Chem.">
        <title>Site-specific Lys-63-linked tumor necrosis factor receptor-associated factor 6 auto-ubiquitination is a critical determinant of I kappa B kinase activation.</title>
        <authorList>
            <person name="Lamothe B."/>
            <person name="Besse A."/>
            <person name="Campos A.D."/>
            <person name="Webster W.K."/>
            <person name="Wu H."/>
            <person name="Darnay B.G."/>
        </authorList>
    </citation>
    <scope>MUTAGENESIS OF CYS-70 AND LYS-124</scope>
    <scope>UBIQUITINATION AT LYS-124</scope>
    <scope>FUNCTION</scope>
    <scope>CATALYTIC ACTIVITY</scope>
</reference>
<reference key="45">
    <citation type="journal article" date="2007" name="J. Biol. Chem.">
        <title>RBCK1 negatively regulates tumor necrosis factor- and interleukin-1-triggered NF-kappaB activation by targeting TAB2/3 for degradation.</title>
        <authorList>
            <person name="Tian Y."/>
            <person name="Zhang Y."/>
            <person name="Zhong B."/>
            <person name="Wang Y.Y."/>
            <person name="Diao F.C."/>
            <person name="Wang R.P."/>
            <person name="Zhang M."/>
            <person name="Chen D.Y."/>
            <person name="Zhai Z.H."/>
            <person name="Shu H.B."/>
        </authorList>
    </citation>
    <scope>INTERACTION WITH RBCK1</scope>
</reference>
<reference key="46">
    <citation type="journal article" date="2007" name="EMBO J.">
        <title>Essential role for TAX1BP1 in the termination of TNF-alpha-, IL-1- and LPS-mediated NF-kappaB and JNK signaling.</title>
        <authorList>
            <person name="Shembade N."/>
            <person name="Harhaj N.S."/>
            <person name="Liebl D.J."/>
            <person name="Harhaj E.W."/>
        </authorList>
    </citation>
    <scope>FUNCTION</scope>
    <scope>INTERACTION WITH TAX1BP1</scope>
</reference>
<reference key="47">
    <citation type="journal article" date="2008" name="J. Biol. Chem.">
        <title>Nuclear tumor necrosis factor receptor-associated factor 6 in lymphoid cells negatively regulates c-Myb-mediated transactivation through small ubiquitin-related modifier-1 modification.</title>
        <authorList>
            <person name="Pham L.V."/>
            <person name="Zhou H.J."/>
            <person name="Lin-Lee Y.C."/>
            <person name="Tamayo A.T."/>
            <person name="Yoshimura L.C."/>
            <person name="Fu L."/>
            <person name="Darnay B.G."/>
            <person name="Ford R.J."/>
        </authorList>
    </citation>
    <scope>SUBCELLULAR LOCATION</scope>
    <scope>FUNCTION</scope>
    <scope>SUMOYLATION AT LYS-124; LYS-142 AND LYS-453</scope>
    <scope>UBIQUITINATION</scope>
    <scope>INTERACTION WITH HDAC1 AND RANGAP1</scope>
    <scope>MUTAGENESIS OF LYS-124; LYS-142 AND LYS-453</scope>
</reference>
<reference key="48">
    <citation type="journal article" date="2008" name="Mol. Cell. Biol.">
        <title>Lys63-linked polyubiquitination of IRAK-1 is required for interleukin-1 receptor- and toll-like receptor-mediated NF-kappaB activation.</title>
        <authorList>
            <person name="Conze D.B."/>
            <person name="Wu C.J."/>
            <person name="Thomas J.A."/>
            <person name="Landstrom A."/>
            <person name="Ashwell J.D."/>
        </authorList>
    </citation>
    <scope>FUNCTION IN UBIQUITINATION OR IRAK1</scope>
</reference>
<reference key="49">
    <citation type="journal article" date="2008" name="Nat. Cell Biol.">
        <title>The type I TGF-beta receptor engages TRAF6 to activate TAK1 in a receptor kinase-independent manner.</title>
        <authorList>
            <person name="Sorrentino A."/>
            <person name="Thakur N."/>
            <person name="Grimsby S."/>
            <person name="Marcusson A."/>
            <person name="von Bulow V."/>
            <person name="Schuster N."/>
            <person name="Zhang S."/>
            <person name="Heldin C.H."/>
            <person name="Landstrom M."/>
        </authorList>
    </citation>
    <scope>FUNCTION</scope>
    <scope>INTERACTION WITH TGFBR1</scope>
    <scope>UBIQUITINATION</scope>
</reference>
<reference key="50">
    <citation type="journal article" date="2009" name="Cell. Mol. Life Sci.">
        <title>WDR34 is a novel TAK1-associated suppressor of the IL-1R/TLR3/TLR4-induced NF-kappaB activation pathway.</title>
        <authorList>
            <person name="Gao D."/>
            <person name="Wang R."/>
            <person name="Li B."/>
            <person name="Yang Y."/>
            <person name="Zhai Z."/>
            <person name="Chen D.Y."/>
        </authorList>
    </citation>
    <scope>INTERACTION WITH DYNC2I2</scope>
</reference>
<reference key="51">
    <citation type="journal article" date="2009" name="Nature">
        <title>Direct activation of protein kinases by unanchored polyubiquitin chains.</title>
        <authorList>
            <person name="Xia Z.-P."/>
            <person name="Sun L."/>
            <person name="Chen X."/>
            <person name="Pineda G."/>
            <person name="Jiang X."/>
            <person name="Adhikari A."/>
            <person name="Zeng W."/>
            <person name="Chen Z.J."/>
        </authorList>
    </citation>
    <scope>FUNCTION</scope>
    <scope>UBIQUITINATION</scope>
</reference>
<reference key="52">
    <citation type="journal article" date="2009" name="Science">
        <title>The E3 ligase TRAF6 regulates Akt ubiquitination and activation.</title>
        <authorList>
            <person name="Yang W.-L."/>
            <person name="Wang J."/>
            <person name="Chan C.-H."/>
            <person name="Lee S.-W."/>
            <person name="Campos A.D."/>
            <person name="Lamothe B."/>
            <person name="Hur L."/>
            <person name="Grabiner B.C."/>
            <person name="Lin X."/>
            <person name="Darnay B.G."/>
            <person name="Lin H.-K."/>
        </authorList>
    </citation>
    <scope>FUNCTION</scope>
    <scope>CATALYTIC ACTIVITY</scope>
</reference>
<reference key="53">
    <citation type="journal article" date="2009" name="Sci. Signal.">
        <title>Act1, a U-box E3 ubiquitin ligase for IL-17 signaling.</title>
        <authorList>
            <person name="Liu C."/>
            <person name="Qian W."/>
            <person name="Qian Y."/>
            <person name="Giltiay N.V."/>
            <person name="Lu Y."/>
            <person name="Swaidani S."/>
            <person name="Misra S."/>
            <person name="Deng L."/>
            <person name="Chen Z.J."/>
            <person name="Li X."/>
        </authorList>
    </citation>
    <scope>FUNCTION</scope>
    <scope>UBIQUITINATION AT LYS-124</scope>
    <scope>MUTAGENESIS OF CYS-70 AND LYS-124</scope>
    <scope>INTERACTION WITH IL17RA AND TRAF3IP2</scope>
</reference>
<reference key="54">
    <citation type="journal article" date="2010" name="Biochem. Biophys. Res. Commun.">
        <title>NUMBL interacts with TRAF6 and promotes the degradation of TRAF6.</title>
        <authorList>
            <person name="Zhou L."/>
            <person name="Ma Q."/>
            <person name="Shi H."/>
            <person name="Huo K."/>
        </authorList>
    </citation>
    <scope>INTERACTION WITH NUMBL</scope>
</reference>
<reference key="55">
    <citation type="journal article" date="2010" name="Cell Res.">
        <title>Tom70 mediates activation of interferon regulatory factor 3 on mitochondria.</title>
        <authorList>
            <person name="Liu X.Y."/>
            <person name="Wei B."/>
            <person name="Shi H.X."/>
            <person name="Shan Y.F."/>
            <person name="Wang C."/>
        </authorList>
    </citation>
    <scope>INTERACTION WITH TOMM70</scope>
</reference>
<reference key="56">
    <citation type="journal article" date="2011" name="J. Cell. Physiol.">
        <title>Alternative splicing of CARMA2/CARD14 transcripts generates protein variants with differential effect on NF-kappaB activation and endoplasmic reticulum stress-induced cell death.</title>
        <authorList>
            <person name="Scudiero I."/>
            <person name="Zotti T."/>
            <person name="Ferravante A."/>
            <person name="Vessichelli M."/>
            <person name="Vito P."/>
            <person name="Stilo R."/>
        </authorList>
    </citation>
    <scope>INTERACTION WITH CARD14</scope>
</reference>
<reference key="57">
    <citation type="journal article" date="2011" name="J. Immunol.">
        <title>IFN-induced TPR protein IFIT3 potentiates antiviral signaling by bridging MAVS and TBK1.</title>
        <authorList>
            <person name="Liu X.Y."/>
            <person name="Chen W."/>
            <person name="Wei B."/>
            <person name="Shan Y.F."/>
            <person name="Wang C."/>
        </authorList>
    </citation>
    <scope>INTERACTION WITH IFIT3</scope>
</reference>
<reference key="58">
    <citation type="journal article" date="2013" name="J. Immunol.">
        <title>SASH1 is a scaffold molecule in endothelial TLR4 signaling.</title>
        <authorList>
            <person name="Dauphinee S.M."/>
            <person name="Clayton A."/>
            <person name="Hussainkhel A."/>
            <person name="Yang C."/>
            <person name="Park Y.J."/>
            <person name="Fuller M.E."/>
            <person name="Blonder J."/>
            <person name="Veenstra T.D."/>
            <person name="Karsan A."/>
        </authorList>
    </citation>
    <scope>INTERACTION WITH SASH1</scope>
</reference>
<reference key="59">
    <citation type="journal article" date="2013" name="Nat. Cell Biol.">
        <title>mTOR inhibits autophagy by controlling ULK1 ubiquitylation, self-association and function through AMBRA1 and TRAF6.</title>
        <authorList>
            <person name="Nazio F."/>
            <person name="Strappazzon F."/>
            <person name="Antonioli M."/>
            <person name="Bielli P."/>
            <person name="Cianfanelli V."/>
            <person name="Bordi M."/>
            <person name="Gretzmeier C."/>
            <person name="Dengjel J."/>
            <person name="Piacentini M."/>
            <person name="Fimia G.M."/>
            <person name="Cecconi F."/>
        </authorList>
    </citation>
    <scope>INTERACTION WITH AMBRA1</scope>
</reference>
<reference key="60">
    <citation type="journal article" date="2013" name="J. Immunol.">
        <title>TNFR-associated factor 6 regulates TCR signaling via interaction with and modification of LAT adapter.</title>
        <authorList>
            <person name="Xie J.J."/>
            <person name="Liang J.Q."/>
            <person name="Diao L.H."/>
            <person name="Altman A."/>
            <person name="Li Y."/>
        </authorList>
    </citation>
    <scope>FUNCTION</scope>
    <scope>CATALYTIC ACTIVITY</scope>
    <scope>SUBCELLULAR LOCATION</scope>
    <scope>MUTAGENESIS OF CYS-70</scope>
</reference>
<reference key="61">
    <citation type="journal article" date="2014" name="PLoS Pathog.">
        <title>Epstein-Barr virus large tegument protein BPLF1 contributes to innate immune evasion through interference with toll-like receptor signaling.</title>
        <authorList>
            <person name="van Gent M."/>
            <person name="Braem S.G."/>
            <person name="de Jong A."/>
            <person name="Delagic N."/>
            <person name="Peeters J.G."/>
            <person name="Boer I.G."/>
            <person name="Moynagh P.N."/>
            <person name="Kremmer E."/>
            <person name="Wiertz E.J."/>
            <person name="Ovaa H."/>
            <person name="Griffin B.D."/>
            <person name="Ressing M.E."/>
        </authorList>
    </citation>
    <scope>SUBCELLULAR LOCATION</scope>
    <scope>DEUBIQUITINATION BY EPSTEIN-BARR VIRUS PROTEIN BPLF1 (MICROBIAL INFECTION)</scope>
</reference>
<reference key="62">
    <citation type="journal article" date="2014" name="Nat. Commun.">
        <title>LRRC19 expressed in the kidney induces TRAF2/6-mediated signals to prevent infection by uropathogenic bacteria.</title>
        <authorList>
            <person name="Su X."/>
            <person name="Min S."/>
            <person name="Cao S."/>
            <person name="Yan H."/>
            <person name="Zhao Y."/>
            <person name="Li H."/>
            <person name="Chai L."/>
            <person name="Mei S."/>
            <person name="Yang J."/>
            <person name="Zhang Y."/>
            <person name="Zhang Z."/>
            <person name="Liu F."/>
            <person name="Sun W."/>
            <person name="Che Y."/>
            <person name="Yang R."/>
        </authorList>
    </citation>
    <scope>UBIQUITINATION</scope>
    <scope>INTERACTION WITH LRRC19</scope>
</reference>
<reference key="63">
    <citation type="journal article" date="2015" name="J. Biol. Chem.">
        <title>The Us3 Protein of Herpes Simplex Virus 1 Inhibits T Cell Signaling by Confining Linker for Activation of T Cells (LAT) Activation via TRAF6 Protein.</title>
        <authorList>
            <person name="Yang Y."/>
            <person name="Wu S."/>
            <person name="Wang Y."/>
            <person name="Pan S."/>
            <person name="Lan B."/>
            <person name="Liu Y."/>
            <person name="Zhang L."/>
            <person name="Leng Q."/>
            <person name="Chen D."/>
            <person name="Zhang C."/>
            <person name="He B."/>
            <person name="Cao Y."/>
        </authorList>
    </citation>
    <scope>FUNCTION</scope>
</reference>
<reference key="64">
    <citation type="journal article" date="2015" name="EMBO Rep.">
        <title>WDFY1 mediates TLR3/4 signaling by recruiting TRIF.</title>
        <authorList>
            <person name="Hu Y.H."/>
            <person name="Zhang Y."/>
            <person name="Jiang L.Q."/>
            <person name="Wang S."/>
            <person name="Lei C.Q."/>
            <person name="Sun M.S."/>
            <person name="Shu H.B."/>
            <person name="Liu Y."/>
        </authorList>
    </citation>
    <scope>INTERACTION WITH TICAM1</scope>
</reference>
<reference key="65">
    <citation type="journal article" date="2015" name="J. Biol. Chem.">
        <title>TRAF family member-associated NF-kappaB activator (TANK) inhibits genotoxic nuclear factor kappaB activation by facilitating deubiquitinase USP10-dependent deubiquitination of TRAF6 ligase.</title>
        <authorList>
            <person name="Wang W."/>
            <person name="Huang X."/>
            <person name="Xin H.B."/>
            <person name="Fu M."/>
            <person name="Xue A."/>
            <person name="Wu Z.H."/>
        </authorList>
    </citation>
    <scope>INTERACTION WITH TANK; USP10 AND ZC3H12A</scope>
    <scope>DEUBIQUITINATION BY USP10</scope>
</reference>
<reference key="66">
    <citation type="journal article" date="2016" name="Mol. Cell">
        <title>The K48-K63 branched ubiquitin chain regulates NF-kappaB signaling.</title>
        <authorList>
            <person name="Ohtake F."/>
            <person name="Saeki Y."/>
            <person name="Ishido S."/>
            <person name="Kanno J."/>
            <person name="Tanaka K."/>
        </authorList>
    </citation>
    <scope>FUNCTION</scope>
    <scope>CATALYTIC ACTIVITY</scope>
    <scope>PATHWAY</scope>
    <scope>MUTAGENESIS OF CYS-70</scope>
</reference>
<reference key="67">
    <citation type="journal article" date="2017" name="Mol. Pharmacol.">
        <title>Trim13 potentiates toll-like receptor 2-mediated nuclear factor kappaB activation via K29-linked polyubiquitination of tumor necrosis factor receptor-associated factor 6.</title>
        <authorList>
            <person name="Huang B."/>
            <person name="Baek S.H."/>
        </authorList>
    </citation>
    <scope>INTERACTION WITH TRIM13</scope>
</reference>
<reference key="68">
    <citation type="journal article" date="2019" name="Front. Immunol.">
        <title>CRBN Is a Negative Regulator of Bactericidal Activity and Autophagy Activation Through Inhibiting the Ubiquitination of ECSIT and BECN1.</title>
        <authorList>
            <person name="Kim M.J."/>
            <person name="Min Y."/>
            <person name="Shim J.H."/>
            <person name="Chun E."/>
            <person name="Lee K.Y."/>
        </authorList>
    </citation>
    <scope>FUNCTION</scope>
    <scope>INTERACTION WITH CRBN</scope>
</reference>
<reference key="69">
    <citation type="journal article" date="2002" name="Nature">
        <title>Distinct molecular mechanism for initiating TRAF6 signalling.</title>
        <authorList>
            <person name="Ye H."/>
            <person name="Arron J.R."/>
            <person name="Lamothe B."/>
            <person name="Cirilli M."/>
            <person name="Kobayashi T."/>
            <person name="Shevde N.K."/>
            <person name="Segal D."/>
            <person name="Dzivenu O.K."/>
            <person name="Vologodskaia M."/>
            <person name="Yim M."/>
            <person name="Du K."/>
            <person name="Singh S."/>
            <person name="Pike J.W."/>
            <person name="Darnay B.G."/>
            <person name="Choi Y."/>
            <person name="Wu H."/>
        </authorList>
    </citation>
    <scope>X-RAY CRYSTALLOGRAPHY (1.8 ANGSTROMS) OF 347-506 OF APOPROTEIN AND IN COMPLEXES WITH TNFRSF5 AND TNFRSF11A PEPTIDES</scope>
    <scope>FUNCTION</scope>
    <scope>SUBUNIT</scope>
</reference>
<reference key="70">
    <citation type="journal article" date="2007" name="Protein Sci.">
        <title>Structure, interactions, and dynamics of the RING domain from human TRAF6.</title>
        <authorList>
            <person name="Mercier P."/>
            <person name="Lewis M.J."/>
            <person name="Hau D.D."/>
            <person name="Saltibus L.F."/>
            <person name="Xiao W."/>
            <person name="Spyracopoulos L."/>
        </authorList>
    </citation>
    <scope>STRUCTURE BY NMR OF 63-124 IN COMPLEX WITH ZINC IONS</scope>
    <scope>INTERACTION WITH UBE2N</scope>
</reference>
<reference key="71">
    <citation type="submission" date="2008-03" db="PDB data bank">
        <title>Solution structure of the RING domain of the human TNF receptor-associated factor 6 protein.</title>
        <authorList>
            <consortium name="RIKEN structural genomics initiative (RSGI)"/>
        </authorList>
    </citation>
    <scope>STRUCTURE BY NMR OF 43-128</scope>
</reference>
<reference key="72">
    <citation type="journal article" date="2009" name="Nat. Struct. Mol. Biol.">
        <title>E2 interaction and dimerization in the crystal structure of TRAF6.</title>
        <authorList>
            <person name="Yin Q."/>
            <person name="Lin S.C."/>
            <person name="Lamothe B."/>
            <person name="Lu M."/>
            <person name="Lo Y.C."/>
            <person name="Hura G."/>
            <person name="Zheng L."/>
            <person name="Rich R.L."/>
            <person name="Campos A.D."/>
            <person name="Myszka D.G."/>
            <person name="Lenardo M.J."/>
            <person name="Darnay B.G."/>
            <person name="Wu H."/>
        </authorList>
    </citation>
    <scope>X-RAY CRYSTALLOGRAPHY (2.1 ANGSTROMS) OF 50-211 IN COMPLEXES WITH ZINC IONS AND UBE2N</scope>
    <scope>SUBUNIT</scope>
    <scope>FUNCTION</scope>
    <scope>AUTOUBIQUITINATION</scope>
    <scope>MUTAGENESIS OF ASP-57; CYS-70; ILE-72; LEU-74; ARG-88; PHE-118; PHE-122 AND LYS-124</scope>
    <scope>ZINC-FINGER</scope>
</reference>
<evidence type="ECO:0000250" key="1"/>
<evidence type="ECO:0000250" key="2">
    <source>
        <dbReference type="UniProtKB" id="P70196"/>
    </source>
</evidence>
<evidence type="ECO:0000255" key="3"/>
<evidence type="ECO:0000255" key="4">
    <source>
        <dbReference type="PROSITE-ProRule" id="PRU00129"/>
    </source>
</evidence>
<evidence type="ECO:0000255" key="5">
    <source>
        <dbReference type="PROSITE-ProRule" id="PRU00175"/>
    </source>
</evidence>
<evidence type="ECO:0000255" key="6">
    <source>
        <dbReference type="PROSITE-ProRule" id="PRU00207"/>
    </source>
</evidence>
<evidence type="ECO:0000269" key="7">
    <source>
    </source>
</evidence>
<evidence type="ECO:0000269" key="8">
    <source>
    </source>
</evidence>
<evidence type="ECO:0000269" key="9">
    <source>
    </source>
</evidence>
<evidence type="ECO:0000269" key="10">
    <source>
    </source>
</evidence>
<evidence type="ECO:0000269" key="11">
    <source>
    </source>
</evidence>
<evidence type="ECO:0000269" key="12">
    <source>
    </source>
</evidence>
<evidence type="ECO:0000269" key="13">
    <source>
    </source>
</evidence>
<evidence type="ECO:0000269" key="14">
    <source>
    </source>
</evidence>
<evidence type="ECO:0000269" key="15">
    <source>
    </source>
</evidence>
<evidence type="ECO:0000269" key="16">
    <source>
    </source>
</evidence>
<evidence type="ECO:0000269" key="17">
    <source>
    </source>
</evidence>
<evidence type="ECO:0000269" key="18">
    <source>
    </source>
</evidence>
<evidence type="ECO:0000269" key="19">
    <source>
    </source>
</evidence>
<evidence type="ECO:0000269" key="20">
    <source>
    </source>
</evidence>
<evidence type="ECO:0000269" key="21">
    <source>
    </source>
</evidence>
<evidence type="ECO:0000269" key="22">
    <source>
    </source>
</evidence>
<evidence type="ECO:0000269" key="23">
    <source>
    </source>
</evidence>
<evidence type="ECO:0000269" key="24">
    <source>
    </source>
</evidence>
<evidence type="ECO:0000269" key="25">
    <source>
    </source>
</evidence>
<evidence type="ECO:0000269" key="26">
    <source>
    </source>
</evidence>
<evidence type="ECO:0000269" key="27">
    <source>
    </source>
</evidence>
<evidence type="ECO:0000269" key="28">
    <source>
    </source>
</evidence>
<evidence type="ECO:0000269" key="29">
    <source>
    </source>
</evidence>
<evidence type="ECO:0000269" key="30">
    <source>
    </source>
</evidence>
<evidence type="ECO:0000269" key="31">
    <source>
    </source>
</evidence>
<evidence type="ECO:0000269" key="32">
    <source>
    </source>
</evidence>
<evidence type="ECO:0000269" key="33">
    <source>
    </source>
</evidence>
<evidence type="ECO:0000305" key="34"/>
<evidence type="ECO:0007829" key="35">
    <source>
        <dbReference type="PDB" id="1LB6"/>
    </source>
</evidence>
<evidence type="ECO:0007829" key="36">
    <source>
        <dbReference type="PDB" id="2ECI"/>
    </source>
</evidence>
<evidence type="ECO:0007829" key="37">
    <source>
        <dbReference type="PDB" id="3HCS"/>
    </source>
</evidence>
<evidence type="ECO:0007829" key="38">
    <source>
        <dbReference type="PDB" id="3HCT"/>
    </source>
</evidence>
<evidence type="ECO:0007829" key="39">
    <source>
        <dbReference type="PDB" id="3HCU"/>
    </source>
</evidence>
<evidence type="ECO:0007829" key="40">
    <source>
        <dbReference type="PDB" id="6A33"/>
    </source>
</evidence>
<evidence type="ECO:0007829" key="41">
    <source>
        <dbReference type="PDB" id="8HZ2"/>
    </source>
</evidence>
<feature type="chain" id="PRO_0000056407" description="TNF receptor-associated factor 6">
    <location>
        <begin position="1"/>
        <end position="522"/>
    </location>
</feature>
<feature type="domain" description="MATH" evidence="4">
    <location>
        <begin position="350"/>
        <end position="499"/>
    </location>
</feature>
<feature type="zinc finger region" description="RING-type" evidence="5">
    <location>
        <begin position="70"/>
        <end position="109"/>
    </location>
</feature>
<feature type="zinc finger region" description="TRAF-type 1" evidence="6">
    <location>
        <begin position="150"/>
        <end position="202"/>
    </location>
</feature>
<feature type="zinc finger region" description="TRAF-type 2" evidence="6">
    <location>
        <begin position="203"/>
        <end position="259"/>
    </location>
</feature>
<feature type="region of interest" description="Interaction with TAX1BP1" evidence="7">
    <location>
        <begin position="1"/>
        <end position="354"/>
    </location>
</feature>
<feature type="region of interest" description="Interaction with TANK" evidence="28">
    <location>
        <begin position="355"/>
        <end position="522"/>
    </location>
</feature>
<feature type="coiled-coil region" evidence="3">
    <location>
        <begin position="288"/>
        <end position="348"/>
    </location>
</feature>
<feature type="cross-link" description="Glycyl lysine isopeptide (Lys-Gly) (interchain with G-Cter in SUMO); alternate">
    <location>
        <position position="124"/>
    </location>
</feature>
<feature type="cross-link" description="Glycyl lysine isopeptide (Lys-Gly) (interchain with G-Cter in ubiquitin); alternate" evidence="12 20">
    <location>
        <position position="124"/>
    </location>
</feature>
<feature type="cross-link" description="Glycyl lysine isopeptide (Lys-Gly) (interchain with G-Cter in SUMO)" evidence="14">
    <location>
        <position position="142"/>
    </location>
</feature>
<feature type="cross-link" description="Glycyl lysine isopeptide (Lys-Gly) (interchain with G-Cter in ubiquitin)" evidence="2">
    <location>
        <position position="319"/>
    </location>
</feature>
<feature type="cross-link" description="Glycyl lysine isopeptide (Lys-Gly) (interchain with G-Cter in SUMO)" evidence="14">
    <location>
        <position position="453"/>
    </location>
</feature>
<feature type="mutagenesis site" description="Loss of interaction with UBE2N." evidence="17">
    <original>D</original>
    <variation>K</variation>
    <location>
        <position position="57"/>
    </location>
</feature>
<feature type="mutagenesis site" description="Loss of ligase activity, autoubiquitination and signaling capacity." evidence="12 17 22 30">
    <original>C</original>
    <variation>A</variation>
    <location>
        <position position="70"/>
    </location>
</feature>
<feature type="mutagenesis site" description="Loss of interaction with UBE2N. Has no effect on TRAF3IP2-mediated 'Lys-63'-linked polyubiquitination." evidence="17 20">
    <original>I</original>
    <variation>D</variation>
    <location>
        <position position="72"/>
    </location>
</feature>
<feature type="mutagenesis site" description="Loss of interaction with UBE2N." evidence="17">
    <original>L</original>
    <variation>E</variation>
    <variation>K</variation>
    <location>
        <position position="74"/>
    </location>
</feature>
<feature type="mutagenesis site" description="Loss of TRAF6 homodimerization and impaired polyubiquitin synthesis. Loss of TRAF6 homodimerization and impaired polyubiquitin synthesis; when associated with A-122." evidence="17">
    <original>R</original>
    <variation>A</variation>
    <location>
        <position position="88"/>
    </location>
</feature>
<feature type="mutagenesis site" description="Loss of TRAF6 homodimerization and impaired polyubiquitin synthesis." evidence="17">
    <original>F</original>
    <variation>A</variation>
    <location>
        <position position="118"/>
    </location>
</feature>
<feature type="mutagenesis site" description="Partially impaired polyubiquitin synthesis." evidence="17">
    <original>F</original>
    <variation>W</variation>
    <location>
        <position position="118"/>
    </location>
</feature>
<feature type="mutagenesis site" description="Partially impaired polyubiquitin synthesis." evidence="17">
    <original>F</original>
    <variation>Y</variation>
    <location>
        <position position="118"/>
    </location>
</feature>
<feature type="mutagenesis site" description="Loss of TRAF6 homodimerization and partially impaired polyubiquitin synthesis. Loss of TRAF6 homodimerization and impaired polyubiquitin synthesis; when associated with A-88." evidence="17">
    <original>F</original>
    <variation>A</variation>
    <location>
        <position position="122"/>
    </location>
</feature>
<feature type="mutagenesis site" description="Loss of SUMO1-modification and c-myb-mediated transcriptional repressive activation. Loss of TRAF3IP2-mediated 'Lys-63'-linked polyubiquitination." evidence="12 14 17 20">
    <original>K</original>
    <variation>R</variation>
    <location>
        <position position="124"/>
    </location>
</feature>
<feature type="mutagenesis site" description="Loss of SUMO1-modification and c-myb-mediated transcriptional repressive activation." evidence="14">
    <original>K</original>
    <variation>R</variation>
    <location>
        <position position="142"/>
    </location>
</feature>
<feature type="mutagenesis site" description="Loss of SUMO1-modification and c-myb-mediated transcriptional repressive activation." evidence="14">
    <original>K</original>
    <variation>R</variation>
    <location>
        <position position="453"/>
    </location>
</feature>
<feature type="sequence conflict" description="In Ref. 6; AAH31052." evidence="34" ref="6">
    <original>S</original>
    <variation>F</variation>
    <location>
        <position position="12"/>
    </location>
</feature>
<feature type="strand" evidence="38">
    <location>
        <begin position="60"/>
        <end position="62"/>
    </location>
</feature>
<feature type="helix" evidence="38">
    <location>
        <begin position="66"/>
        <end position="68"/>
    </location>
</feature>
<feature type="turn" evidence="38">
    <location>
        <begin position="71"/>
        <end position="73"/>
    </location>
</feature>
<feature type="strand" evidence="41">
    <location>
        <begin position="74"/>
        <end position="76"/>
    </location>
</feature>
<feature type="strand" evidence="38">
    <location>
        <begin position="78"/>
        <end position="82"/>
    </location>
</feature>
<feature type="turn" evidence="36">
    <location>
        <begin position="84"/>
        <end position="86"/>
    </location>
</feature>
<feature type="strand" evidence="38">
    <location>
        <begin position="88"/>
        <end position="90"/>
    </location>
</feature>
<feature type="helix" evidence="38">
    <location>
        <begin position="91"/>
        <end position="101"/>
    </location>
</feature>
<feature type="turn" evidence="38">
    <location>
        <begin position="106"/>
        <end position="108"/>
    </location>
</feature>
<feature type="helix" evidence="38">
    <location>
        <begin position="114"/>
        <end position="116"/>
    </location>
</feature>
<feature type="helix" evidence="38">
    <location>
        <begin position="121"/>
        <end position="128"/>
    </location>
</feature>
<feature type="strand" evidence="38">
    <location>
        <begin position="130"/>
        <end position="133"/>
    </location>
</feature>
<feature type="strand" evidence="39">
    <location>
        <begin position="135"/>
        <end position="138"/>
    </location>
</feature>
<feature type="strand" evidence="38">
    <location>
        <begin position="142"/>
        <end position="144"/>
    </location>
</feature>
<feature type="helix" evidence="38">
    <location>
        <begin position="145"/>
        <end position="147"/>
    </location>
</feature>
<feature type="helix" evidence="38">
    <location>
        <begin position="149"/>
        <end position="151"/>
    </location>
</feature>
<feature type="strand" evidence="38">
    <location>
        <begin position="153"/>
        <end position="155"/>
    </location>
</feature>
<feature type="strand" evidence="37">
    <location>
        <begin position="158"/>
        <end position="161"/>
    </location>
</feature>
<feature type="turn" evidence="37">
    <location>
        <begin position="163"/>
        <end position="165"/>
    </location>
</feature>
<feature type="strand" evidence="37">
    <location>
        <begin position="168"/>
        <end position="170"/>
    </location>
</feature>
<feature type="helix" evidence="37">
    <location>
        <begin position="171"/>
        <end position="173"/>
    </location>
</feature>
<feature type="helix" evidence="37">
    <location>
        <begin position="174"/>
        <end position="180"/>
    </location>
</feature>
<feature type="strand" evidence="37">
    <location>
        <begin position="186"/>
        <end position="188"/>
    </location>
</feature>
<feature type="turn" evidence="37">
    <location>
        <begin position="190"/>
        <end position="192"/>
    </location>
</feature>
<feature type="strand" evidence="37">
    <location>
        <begin position="195"/>
        <end position="197"/>
    </location>
</feature>
<feature type="helix" evidence="37">
    <location>
        <begin position="198"/>
        <end position="200"/>
    </location>
</feature>
<feature type="helix" evidence="37">
    <location>
        <begin position="201"/>
        <end position="205"/>
    </location>
</feature>
<feature type="strand" evidence="35">
    <location>
        <begin position="351"/>
        <end position="357"/>
    </location>
</feature>
<feature type="helix" evidence="35">
    <location>
        <begin position="360"/>
        <end position="368"/>
    </location>
</feature>
<feature type="strand" evidence="35">
    <location>
        <begin position="373"/>
        <end position="376"/>
    </location>
</feature>
<feature type="strand" evidence="35">
    <location>
        <begin position="380"/>
        <end position="385"/>
    </location>
</feature>
<feature type="strand" evidence="35">
    <location>
        <begin position="388"/>
        <end position="395"/>
    </location>
</feature>
<feature type="turn" evidence="35">
    <location>
        <begin position="401"/>
        <end position="405"/>
    </location>
</feature>
<feature type="strand" evidence="35">
    <location>
        <begin position="406"/>
        <end position="414"/>
    </location>
</feature>
<feature type="helix" evidence="35">
    <location>
        <begin position="419"/>
        <end position="421"/>
    </location>
</feature>
<feature type="strand" evidence="35">
    <location>
        <begin position="428"/>
        <end position="434"/>
    </location>
</feature>
<feature type="helix" evidence="40">
    <location>
        <begin position="440"/>
        <end position="442"/>
    </location>
</feature>
<feature type="strand" evidence="35">
    <location>
        <begin position="446"/>
        <end position="451"/>
    </location>
</feature>
<feature type="helix" evidence="35">
    <location>
        <begin position="457"/>
        <end position="459"/>
    </location>
</feature>
<feature type="strand" evidence="35">
    <location>
        <begin position="463"/>
        <end position="466"/>
    </location>
</feature>
<feature type="strand" evidence="35">
    <location>
        <begin position="468"/>
        <end position="478"/>
    </location>
</feature>
<feature type="helix" evidence="35">
    <location>
        <begin position="479"/>
        <end position="483"/>
    </location>
</feature>
<feature type="turn" evidence="40">
    <location>
        <begin position="484"/>
        <end position="486"/>
    </location>
</feature>
<feature type="strand" evidence="35">
    <location>
        <begin position="492"/>
        <end position="500"/>
    </location>
</feature>
<gene>
    <name type="primary">TRAF6</name>
    <name type="synonym">RNF85</name>
</gene>
<keyword id="KW-0002">3D-structure</keyword>
<keyword id="KW-0175">Coiled coil</keyword>
<keyword id="KW-0963">Cytoplasm</keyword>
<keyword id="KW-0227">DNA damage</keyword>
<keyword id="KW-0391">Immunity</keyword>
<keyword id="KW-1017">Isopeptide bond</keyword>
<keyword id="KW-0551">Lipid droplet</keyword>
<keyword id="KW-0479">Metal-binding</keyword>
<keyword id="KW-0539">Nucleus</keyword>
<keyword id="KW-0892">Osteogenesis</keyword>
<keyword id="KW-1267">Proteomics identification</keyword>
<keyword id="KW-1185">Reference proteome</keyword>
<keyword id="KW-0677">Repeat</keyword>
<keyword id="KW-0808">Transferase</keyword>
<keyword id="KW-0832">Ubl conjugation</keyword>
<keyword id="KW-0833">Ubl conjugation pathway</keyword>
<keyword id="KW-0862">Zinc</keyword>
<keyword id="KW-0863">Zinc-finger</keyword>
<sequence>MSLLNCENSCGSSQSESDCCVAMASSCSAVTKDDSVGGTASTGNLSSSFMEEIQGYDVEFDPPLESKYECPICLMALREAVQTPCGHRFCKACIIKSIRDAGHKCPVDNEILLENQLFPDNFAKREILSLMVKCPNEGCLHKMELRHLEDHQAHCEFALMDCPQCQRPFQKFHINIHILKDCPRRQVSCDNCAASMAFEDKEIHDQNCPLANVICEYCNTILIREQMPNHYDLDCPTAPIPCTFSTFGCHEKMQRNHLARHLQENTQSHMRMLAQAVHSLSVIPDSGYISEVRNFQETIHQLEGRLVRQDHQIRELTAKMETQSMYVSELKRTIRTLEDKVAEIEAQQCNGIYIWKIGNFGMHLKCQEEEKPVVIHSPGFYTGKPGYKLCMRLHLQLPTAQRCANYISLFVHTMQGEYDSHLPWPFQGTIRLTILDQSEAPVRQNHEEIMDAKPELLAFQRPTIPRNPKGFGYVTFMHLEALRQRTFIKDDTLLVRCEVSTRFDMGSLRREGFQPRSTDAGV</sequence>
<proteinExistence type="evidence at protein level"/>